<accession>P25043</accession>
<accession>D6W2L4</accession>
<proteinExistence type="evidence at protein level"/>
<keyword id="KW-0002">3D-structure</keyword>
<keyword id="KW-0963">Cytoplasm</keyword>
<keyword id="KW-0378">Hydrolase</keyword>
<keyword id="KW-0539">Nucleus</keyword>
<keyword id="KW-0645">Protease</keyword>
<keyword id="KW-0647">Proteasome</keyword>
<keyword id="KW-1185">Reference proteome</keyword>
<keyword id="KW-0888">Threonine protease</keyword>
<keyword id="KW-0865">Zymogen</keyword>
<organism>
    <name type="scientific">Saccharomyces cerevisiae (strain ATCC 204508 / S288c)</name>
    <name type="common">Baker's yeast</name>
    <dbReference type="NCBI Taxonomy" id="559292"/>
    <lineage>
        <taxon>Eukaryota</taxon>
        <taxon>Fungi</taxon>
        <taxon>Dikarya</taxon>
        <taxon>Ascomycota</taxon>
        <taxon>Saccharomycotina</taxon>
        <taxon>Saccharomycetes</taxon>
        <taxon>Saccharomycetales</taxon>
        <taxon>Saccharomycetaceae</taxon>
        <taxon>Saccharomyces</taxon>
    </lineage>
</organism>
<gene>
    <name type="primary">PUP1</name>
    <name type="ordered locus">YOR157C</name>
</gene>
<dbReference type="EC" id="3.4.25.1"/>
<dbReference type="EMBL" id="X61189">
    <property type="protein sequence ID" value="CAA43492.1"/>
    <property type="molecule type" value="Genomic_DNA"/>
</dbReference>
<dbReference type="EMBL" id="U55020">
    <property type="protein sequence ID" value="AAC49643.1"/>
    <property type="molecule type" value="Genomic_DNA"/>
</dbReference>
<dbReference type="EMBL" id="Z75065">
    <property type="protein sequence ID" value="CAA99363.1"/>
    <property type="molecule type" value="Genomic_DNA"/>
</dbReference>
<dbReference type="EMBL" id="BK006948">
    <property type="protein sequence ID" value="DAA10930.1"/>
    <property type="molecule type" value="Genomic_DNA"/>
</dbReference>
<dbReference type="PIR" id="S26996">
    <property type="entry name" value="S26996"/>
</dbReference>
<dbReference type="RefSeq" id="NP_014800.3">
    <property type="nucleotide sequence ID" value="NM_001183576.3"/>
</dbReference>
<dbReference type="PDB" id="1FNT">
    <property type="method" value="X-ray"/>
    <property type="resolution" value="3.20 A"/>
    <property type="chains" value="I/W=30-261"/>
</dbReference>
<dbReference type="PDB" id="1G0U">
    <property type="method" value="X-ray"/>
    <property type="resolution" value="2.40 A"/>
    <property type="chains" value="H/V=30-251"/>
</dbReference>
<dbReference type="PDB" id="1G65">
    <property type="method" value="X-ray"/>
    <property type="resolution" value="2.25 A"/>
    <property type="chains" value="H/V=30-251"/>
</dbReference>
<dbReference type="PDB" id="1JD2">
    <property type="method" value="X-ray"/>
    <property type="resolution" value="3.00 A"/>
    <property type="chains" value="H/O=30-251"/>
</dbReference>
<dbReference type="PDB" id="1RYP">
    <property type="method" value="X-ray"/>
    <property type="resolution" value="1.90 A"/>
    <property type="chains" value="I/W=30-251"/>
</dbReference>
<dbReference type="PDB" id="1Z7Q">
    <property type="method" value="X-ray"/>
    <property type="resolution" value="3.22 A"/>
    <property type="chains" value="I/W=30-251"/>
</dbReference>
<dbReference type="PDB" id="2F16">
    <property type="method" value="X-ray"/>
    <property type="resolution" value="2.80 A"/>
    <property type="chains" value="H/V=30-251"/>
</dbReference>
<dbReference type="PDB" id="2FAK">
    <property type="method" value="X-ray"/>
    <property type="resolution" value="2.80 A"/>
    <property type="chains" value="H/V=30-251"/>
</dbReference>
<dbReference type="PDB" id="2GPL">
    <property type="method" value="X-ray"/>
    <property type="resolution" value="2.81 A"/>
    <property type="chains" value="H/V=30-251"/>
</dbReference>
<dbReference type="PDB" id="2ZCY">
    <property type="method" value="X-ray"/>
    <property type="resolution" value="2.90 A"/>
    <property type="chains" value="H/V=30-261"/>
</dbReference>
<dbReference type="PDB" id="3BDM">
    <property type="method" value="X-ray"/>
    <property type="resolution" value="2.70 A"/>
    <property type="chains" value="H/V=30-261"/>
</dbReference>
<dbReference type="PDB" id="3D29">
    <property type="method" value="X-ray"/>
    <property type="resolution" value="2.60 A"/>
    <property type="chains" value="H/V=30-251"/>
</dbReference>
<dbReference type="PDB" id="3DY3">
    <property type="method" value="X-ray"/>
    <property type="resolution" value="2.81 A"/>
    <property type="chains" value="H/V=30-251"/>
</dbReference>
<dbReference type="PDB" id="3DY4">
    <property type="method" value="X-ray"/>
    <property type="resolution" value="2.80 A"/>
    <property type="chains" value="H/V=30-251"/>
</dbReference>
<dbReference type="PDB" id="3E47">
    <property type="method" value="X-ray"/>
    <property type="resolution" value="3.00 A"/>
    <property type="chains" value="H/V=30-251"/>
</dbReference>
<dbReference type="PDB" id="3GPJ">
    <property type="method" value="X-ray"/>
    <property type="resolution" value="2.70 A"/>
    <property type="chains" value="H/V=30-251"/>
</dbReference>
<dbReference type="PDB" id="3GPT">
    <property type="method" value="X-ray"/>
    <property type="resolution" value="2.41 A"/>
    <property type="chains" value="H/V=30-251"/>
</dbReference>
<dbReference type="PDB" id="3GPW">
    <property type="method" value="X-ray"/>
    <property type="resolution" value="2.50 A"/>
    <property type="chains" value="H/V=30-251"/>
</dbReference>
<dbReference type="PDB" id="3HYE">
    <property type="method" value="X-ray"/>
    <property type="resolution" value="2.50 A"/>
    <property type="chains" value="H/V=30-251"/>
</dbReference>
<dbReference type="PDB" id="3JCO">
    <property type="method" value="EM"/>
    <property type="resolution" value="4.80 A"/>
    <property type="chains" value="4/i=1-261"/>
</dbReference>
<dbReference type="PDB" id="3JCP">
    <property type="method" value="EM"/>
    <property type="resolution" value="4.60 A"/>
    <property type="chains" value="4/i=1-261"/>
</dbReference>
<dbReference type="PDB" id="3MG0">
    <property type="method" value="X-ray"/>
    <property type="resolution" value="2.68 A"/>
    <property type="chains" value="H/V=30-251"/>
</dbReference>
<dbReference type="PDB" id="3MG4">
    <property type="method" value="X-ray"/>
    <property type="resolution" value="3.11 A"/>
    <property type="chains" value="H/V=30-251"/>
</dbReference>
<dbReference type="PDB" id="3MG6">
    <property type="method" value="X-ray"/>
    <property type="resolution" value="2.60 A"/>
    <property type="chains" value="H/V=30-251"/>
</dbReference>
<dbReference type="PDB" id="3MG7">
    <property type="method" value="X-ray"/>
    <property type="resolution" value="2.78 A"/>
    <property type="chains" value="H/V=30-251"/>
</dbReference>
<dbReference type="PDB" id="3MG8">
    <property type="method" value="X-ray"/>
    <property type="resolution" value="2.59 A"/>
    <property type="chains" value="H/V=30-251"/>
</dbReference>
<dbReference type="PDB" id="3NZJ">
    <property type="method" value="X-ray"/>
    <property type="resolution" value="2.40 A"/>
    <property type="chains" value="H/V=1-261"/>
</dbReference>
<dbReference type="PDB" id="3NZW">
    <property type="method" value="X-ray"/>
    <property type="resolution" value="2.50 A"/>
    <property type="chains" value="H/V=1-261"/>
</dbReference>
<dbReference type="PDB" id="3NZX">
    <property type="method" value="X-ray"/>
    <property type="resolution" value="2.70 A"/>
    <property type="chains" value="H/V=1-261"/>
</dbReference>
<dbReference type="PDB" id="3OEU">
    <property type="method" value="X-ray"/>
    <property type="resolution" value="2.60 A"/>
    <property type="chains" value="H/V=30-251"/>
</dbReference>
<dbReference type="PDB" id="3OEV">
    <property type="method" value="X-ray"/>
    <property type="resolution" value="2.85 A"/>
    <property type="chains" value="H/V=30-251"/>
</dbReference>
<dbReference type="PDB" id="3OKJ">
    <property type="method" value="X-ray"/>
    <property type="resolution" value="2.70 A"/>
    <property type="chains" value="H/V=30-251"/>
</dbReference>
<dbReference type="PDB" id="3SDI">
    <property type="method" value="X-ray"/>
    <property type="resolution" value="2.65 A"/>
    <property type="chains" value="H/V=30-251"/>
</dbReference>
<dbReference type="PDB" id="3SDK">
    <property type="method" value="X-ray"/>
    <property type="resolution" value="2.70 A"/>
    <property type="chains" value="H/V=30-251"/>
</dbReference>
<dbReference type="PDB" id="3SHJ">
    <property type="method" value="X-ray"/>
    <property type="resolution" value="2.80 A"/>
    <property type="chains" value="H/V=30-251"/>
</dbReference>
<dbReference type="PDB" id="3TDD">
    <property type="method" value="X-ray"/>
    <property type="resolution" value="2.70 A"/>
    <property type="chains" value="H/V=30-251"/>
</dbReference>
<dbReference type="PDB" id="3UN4">
    <property type="method" value="X-ray"/>
    <property type="resolution" value="3.40 A"/>
    <property type="chains" value="H/V=30-261"/>
</dbReference>
<dbReference type="PDB" id="3UN8">
    <property type="method" value="X-ray"/>
    <property type="resolution" value="2.70 A"/>
    <property type="chains" value="H/V=30-261"/>
</dbReference>
<dbReference type="PDB" id="3WXR">
    <property type="method" value="X-ray"/>
    <property type="resolution" value="3.15 A"/>
    <property type="chains" value="I/W=1-261"/>
</dbReference>
<dbReference type="PDB" id="4CR2">
    <property type="method" value="EM"/>
    <property type="resolution" value="7.70 A"/>
    <property type="chains" value="2=1-261"/>
</dbReference>
<dbReference type="PDB" id="4CR3">
    <property type="method" value="EM"/>
    <property type="resolution" value="9.30 A"/>
    <property type="chains" value="2=1-261"/>
</dbReference>
<dbReference type="PDB" id="4CR4">
    <property type="method" value="EM"/>
    <property type="resolution" value="8.80 A"/>
    <property type="chains" value="2=1-261"/>
</dbReference>
<dbReference type="PDB" id="4EU2">
    <property type="method" value="X-ray"/>
    <property type="resolution" value="2.51 A"/>
    <property type="chains" value="I/W=30-251"/>
</dbReference>
<dbReference type="PDB" id="4FZC">
    <property type="method" value="X-ray"/>
    <property type="resolution" value="2.80 A"/>
    <property type="chains" value="H/V=30-251"/>
</dbReference>
<dbReference type="PDB" id="4FZG">
    <property type="method" value="X-ray"/>
    <property type="resolution" value="3.00 A"/>
    <property type="chains" value="H/V=30-251"/>
</dbReference>
<dbReference type="PDB" id="4G4S">
    <property type="method" value="X-ray"/>
    <property type="resolution" value="2.49 A"/>
    <property type="chains" value="I=30-261"/>
</dbReference>
<dbReference type="PDB" id="4GK7">
    <property type="method" value="X-ray"/>
    <property type="resolution" value="2.80 A"/>
    <property type="chains" value="H/V=30-251"/>
</dbReference>
<dbReference type="PDB" id="4HNP">
    <property type="method" value="X-ray"/>
    <property type="resolution" value="2.80 A"/>
    <property type="chains" value="H/V=30-251"/>
</dbReference>
<dbReference type="PDB" id="4HRC">
    <property type="method" value="X-ray"/>
    <property type="resolution" value="2.80 A"/>
    <property type="chains" value="H/V=30-251"/>
</dbReference>
<dbReference type="PDB" id="4HRD">
    <property type="method" value="X-ray"/>
    <property type="resolution" value="2.80 A"/>
    <property type="chains" value="H/V=30-251"/>
</dbReference>
<dbReference type="PDB" id="4INR">
    <property type="method" value="X-ray"/>
    <property type="resolution" value="2.70 A"/>
    <property type="chains" value="H/V=30-261"/>
</dbReference>
<dbReference type="PDB" id="4INT">
    <property type="method" value="X-ray"/>
    <property type="resolution" value="2.90 A"/>
    <property type="chains" value="H/V=30-261"/>
</dbReference>
<dbReference type="PDB" id="4INU">
    <property type="method" value="X-ray"/>
    <property type="resolution" value="3.10 A"/>
    <property type="chains" value="H/V=30-261"/>
</dbReference>
<dbReference type="PDB" id="4J70">
    <property type="method" value="X-ray"/>
    <property type="resolution" value="2.80 A"/>
    <property type="chains" value="H/V=30-261"/>
</dbReference>
<dbReference type="PDB" id="4JSQ">
    <property type="method" value="X-ray"/>
    <property type="resolution" value="2.80 A"/>
    <property type="chains" value="H/V=30-261"/>
</dbReference>
<dbReference type="PDB" id="4JSU">
    <property type="method" value="X-ray"/>
    <property type="resolution" value="2.90 A"/>
    <property type="chains" value="H/V=30-261"/>
</dbReference>
<dbReference type="PDB" id="4JT0">
    <property type="method" value="X-ray"/>
    <property type="resolution" value="3.10 A"/>
    <property type="chains" value="H/V=30-261"/>
</dbReference>
<dbReference type="PDB" id="4LQI">
    <property type="method" value="X-ray"/>
    <property type="resolution" value="2.70 A"/>
    <property type="chains" value="H/V=30-251"/>
</dbReference>
<dbReference type="PDB" id="4LTC">
    <property type="method" value="X-ray"/>
    <property type="resolution" value="2.50 A"/>
    <property type="chains" value="H/V=30-261"/>
</dbReference>
<dbReference type="PDB" id="4NNN">
    <property type="method" value="X-ray"/>
    <property type="resolution" value="2.50 A"/>
    <property type="chains" value="H/V=30-261"/>
</dbReference>
<dbReference type="PDB" id="4NNW">
    <property type="method" value="X-ray"/>
    <property type="resolution" value="2.60 A"/>
    <property type="chains" value="H/V=30-261"/>
</dbReference>
<dbReference type="PDB" id="4NO1">
    <property type="method" value="X-ray"/>
    <property type="resolution" value="2.50 A"/>
    <property type="chains" value="H/V=30-261"/>
</dbReference>
<dbReference type="PDB" id="4NO6">
    <property type="method" value="X-ray"/>
    <property type="resolution" value="3.00 A"/>
    <property type="chains" value="H/V=30-261"/>
</dbReference>
<dbReference type="PDB" id="4NO8">
    <property type="method" value="X-ray"/>
    <property type="resolution" value="2.70 A"/>
    <property type="chains" value="H/V=30-261"/>
</dbReference>
<dbReference type="PDB" id="4NO9">
    <property type="method" value="X-ray"/>
    <property type="resolution" value="2.90 A"/>
    <property type="chains" value="H/V=30-261"/>
</dbReference>
<dbReference type="PDB" id="4Q1S">
    <property type="method" value="X-ray"/>
    <property type="resolution" value="2.60 A"/>
    <property type="chains" value="H/V=30-261"/>
</dbReference>
<dbReference type="PDB" id="4QBY">
    <property type="method" value="X-ray"/>
    <property type="resolution" value="3.00 A"/>
    <property type="chains" value="H/V=30-261"/>
</dbReference>
<dbReference type="PDB" id="4QLQ">
    <property type="method" value="X-ray"/>
    <property type="resolution" value="2.40 A"/>
    <property type="chains" value="H/V=30-261"/>
</dbReference>
<dbReference type="PDB" id="4QLS">
    <property type="method" value="X-ray"/>
    <property type="resolution" value="2.80 A"/>
    <property type="chains" value="H/V=30-261"/>
</dbReference>
<dbReference type="PDB" id="4QLT">
    <property type="method" value="X-ray"/>
    <property type="resolution" value="2.80 A"/>
    <property type="chains" value="H/V=30-261"/>
</dbReference>
<dbReference type="PDB" id="4QLU">
    <property type="method" value="X-ray"/>
    <property type="resolution" value="2.80 A"/>
    <property type="chains" value="H/V=30-261"/>
</dbReference>
<dbReference type="PDB" id="4QLV">
    <property type="method" value="X-ray"/>
    <property type="resolution" value="2.90 A"/>
    <property type="chains" value="H/V=30-261"/>
</dbReference>
<dbReference type="PDB" id="4QUX">
    <property type="method" value="X-ray"/>
    <property type="resolution" value="3.00 A"/>
    <property type="chains" value="H/V=30-261"/>
</dbReference>
<dbReference type="PDB" id="4QUY">
    <property type="method" value="X-ray"/>
    <property type="resolution" value="2.80 A"/>
    <property type="chains" value="H/V=30-261"/>
</dbReference>
<dbReference type="PDB" id="4QV0">
    <property type="method" value="X-ray"/>
    <property type="resolution" value="3.10 A"/>
    <property type="chains" value="H/V=30-261"/>
</dbReference>
<dbReference type="PDB" id="4QV1">
    <property type="method" value="X-ray"/>
    <property type="resolution" value="2.50 A"/>
    <property type="chains" value="H/V=30-261"/>
</dbReference>
<dbReference type="PDB" id="4QV3">
    <property type="method" value="X-ray"/>
    <property type="resolution" value="3.00 A"/>
    <property type="chains" value="H/V=30-261"/>
</dbReference>
<dbReference type="PDB" id="4QV4">
    <property type="method" value="X-ray"/>
    <property type="resolution" value="2.70 A"/>
    <property type="chains" value="H/V=30-261"/>
</dbReference>
<dbReference type="PDB" id="4QV5">
    <property type="method" value="X-ray"/>
    <property type="resolution" value="2.70 A"/>
    <property type="chains" value="H/V=30-261"/>
</dbReference>
<dbReference type="PDB" id="4QV6">
    <property type="method" value="X-ray"/>
    <property type="resolution" value="2.80 A"/>
    <property type="chains" value="H/V=30-261"/>
</dbReference>
<dbReference type="PDB" id="4QV7">
    <property type="method" value="X-ray"/>
    <property type="resolution" value="2.60 A"/>
    <property type="chains" value="H/V=30-261"/>
</dbReference>
<dbReference type="PDB" id="4QV8">
    <property type="method" value="X-ray"/>
    <property type="resolution" value="2.90 A"/>
    <property type="chains" value="H/V=30-261"/>
</dbReference>
<dbReference type="PDB" id="4QV9">
    <property type="method" value="X-ray"/>
    <property type="resolution" value="2.60 A"/>
    <property type="chains" value="H/V=30-261"/>
</dbReference>
<dbReference type="PDB" id="4QVL">
    <property type="method" value="X-ray"/>
    <property type="resolution" value="2.80 A"/>
    <property type="chains" value="H/V=30-261"/>
</dbReference>
<dbReference type="PDB" id="4QVM">
    <property type="method" value="X-ray"/>
    <property type="resolution" value="2.80 A"/>
    <property type="chains" value="H/V=30-261"/>
</dbReference>
<dbReference type="PDB" id="4QVN">
    <property type="method" value="X-ray"/>
    <property type="resolution" value="2.90 A"/>
    <property type="chains" value="H/V=30-261"/>
</dbReference>
<dbReference type="PDB" id="4QVP">
    <property type="method" value="X-ray"/>
    <property type="resolution" value="2.30 A"/>
    <property type="chains" value="H/V=30-261"/>
</dbReference>
<dbReference type="PDB" id="4QVQ">
    <property type="method" value="X-ray"/>
    <property type="resolution" value="2.60 A"/>
    <property type="chains" value="H/V=30-261"/>
</dbReference>
<dbReference type="PDB" id="4QVV">
    <property type="method" value="X-ray"/>
    <property type="resolution" value="2.80 A"/>
    <property type="chains" value="H/V=30-261"/>
</dbReference>
<dbReference type="PDB" id="4QVW">
    <property type="method" value="X-ray"/>
    <property type="resolution" value="3.00 A"/>
    <property type="chains" value="H/V=30-261"/>
</dbReference>
<dbReference type="PDB" id="4QVY">
    <property type="method" value="X-ray"/>
    <property type="resolution" value="2.51 A"/>
    <property type="chains" value="H/V=30-261"/>
</dbReference>
<dbReference type="PDB" id="4QW0">
    <property type="method" value="X-ray"/>
    <property type="resolution" value="2.90 A"/>
    <property type="chains" value="H/V=30-261"/>
</dbReference>
<dbReference type="PDB" id="4QW1">
    <property type="method" value="X-ray"/>
    <property type="resolution" value="2.90 A"/>
    <property type="chains" value="H/V=30-261"/>
</dbReference>
<dbReference type="PDB" id="4QW3">
    <property type="method" value="X-ray"/>
    <property type="resolution" value="2.90 A"/>
    <property type="chains" value="H/V=30-261"/>
</dbReference>
<dbReference type="PDB" id="4QW4">
    <property type="method" value="X-ray"/>
    <property type="resolution" value="2.80 A"/>
    <property type="chains" value="H/V=30-261"/>
</dbReference>
<dbReference type="PDB" id="4QW5">
    <property type="method" value="X-ray"/>
    <property type="resolution" value="3.00 A"/>
    <property type="chains" value="H/V=30-261"/>
</dbReference>
<dbReference type="PDB" id="4QW6">
    <property type="method" value="X-ray"/>
    <property type="resolution" value="2.90 A"/>
    <property type="chains" value="H/V=30-261"/>
</dbReference>
<dbReference type="PDB" id="4QW7">
    <property type="method" value="X-ray"/>
    <property type="resolution" value="2.70 A"/>
    <property type="chains" value="H/V=30-261"/>
</dbReference>
<dbReference type="PDB" id="4QWF">
    <property type="method" value="X-ray"/>
    <property type="resolution" value="3.00 A"/>
    <property type="chains" value="H/V=30-261"/>
</dbReference>
<dbReference type="PDB" id="4QWG">
    <property type="method" value="X-ray"/>
    <property type="resolution" value="2.60 A"/>
    <property type="chains" value="H/V=30-261"/>
</dbReference>
<dbReference type="PDB" id="4QWI">
    <property type="method" value="X-ray"/>
    <property type="resolution" value="2.60 A"/>
    <property type="chains" value="H/V=30-261"/>
</dbReference>
<dbReference type="PDB" id="4QWJ">
    <property type="method" value="X-ray"/>
    <property type="resolution" value="2.90 A"/>
    <property type="chains" value="H/V=30-261"/>
</dbReference>
<dbReference type="PDB" id="4QWK">
    <property type="method" value="X-ray"/>
    <property type="resolution" value="2.80 A"/>
    <property type="chains" value="H/V=30-261"/>
</dbReference>
<dbReference type="PDB" id="4QWL">
    <property type="method" value="X-ray"/>
    <property type="resolution" value="2.60 A"/>
    <property type="chains" value="H/V=30-261"/>
</dbReference>
<dbReference type="PDB" id="4QWR">
    <property type="method" value="X-ray"/>
    <property type="resolution" value="2.90 A"/>
    <property type="chains" value="H/V=30-261"/>
</dbReference>
<dbReference type="PDB" id="4QWS">
    <property type="method" value="X-ray"/>
    <property type="resolution" value="3.00 A"/>
    <property type="chains" value="H/V=30-261"/>
</dbReference>
<dbReference type="PDB" id="4QWU">
    <property type="method" value="X-ray"/>
    <property type="resolution" value="3.00 A"/>
    <property type="chains" value="H/V=30-261"/>
</dbReference>
<dbReference type="PDB" id="4QWX">
    <property type="method" value="X-ray"/>
    <property type="resolution" value="2.90 A"/>
    <property type="chains" value="H/V=30-261"/>
</dbReference>
<dbReference type="PDB" id="4QXJ">
    <property type="method" value="X-ray"/>
    <property type="resolution" value="2.80 A"/>
    <property type="chains" value="H/V=30-261"/>
</dbReference>
<dbReference type="PDB" id="4QZ0">
    <property type="method" value="X-ray"/>
    <property type="resolution" value="3.00 A"/>
    <property type="chains" value="H/V=30-261"/>
</dbReference>
<dbReference type="PDB" id="4QZ1">
    <property type="method" value="X-ray"/>
    <property type="resolution" value="3.00 A"/>
    <property type="chains" value="H/V=30-261"/>
</dbReference>
<dbReference type="PDB" id="4QZ2">
    <property type="method" value="X-ray"/>
    <property type="resolution" value="2.70 A"/>
    <property type="chains" value="H/V=30-261"/>
</dbReference>
<dbReference type="PDB" id="4QZ3">
    <property type="method" value="X-ray"/>
    <property type="resolution" value="2.80 A"/>
    <property type="chains" value="H/V=30-261"/>
</dbReference>
<dbReference type="PDB" id="4QZ4">
    <property type="method" value="X-ray"/>
    <property type="resolution" value="3.00 A"/>
    <property type="chains" value="H/V=30-261"/>
</dbReference>
<dbReference type="PDB" id="4QZ5">
    <property type="method" value="X-ray"/>
    <property type="resolution" value="2.80 A"/>
    <property type="chains" value="H/V=30-261"/>
</dbReference>
<dbReference type="PDB" id="4QZ6">
    <property type="method" value="X-ray"/>
    <property type="resolution" value="2.90 A"/>
    <property type="chains" value="H/V=30-261"/>
</dbReference>
<dbReference type="PDB" id="4QZ7">
    <property type="method" value="X-ray"/>
    <property type="resolution" value="2.80 A"/>
    <property type="chains" value="H/V=30-261"/>
</dbReference>
<dbReference type="PDB" id="4QZW">
    <property type="method" value="X-ray"/>
    <property type="resolution" value="3.00 A"/>
    <property type="chains" value="H/V=30-261"/>
</dbReference>
<dbReference type="PDB" id="4QZX">
    <property type="method" value="X-ray"/>
    <property type="resolution" value="2.60 A"/>
    <property type="chains" value="H/V=30-261"/>
</dbReference>
<dbReference type="PDB" id="4QZZ">
    <property type="method" value="X-ray"/>
    <property type="resolution" value="2.90 A"/>
    <property type="chains" value="H/V=30-261"/>
</dbReference>
<dbReference type="PDB" id="4R00">
    <property type="method" value="X-ray"/>
    <property type="resolution" value="2.80 A"/>
    <property type="chains" value="H/V=30-261"/>
</dbReference>
<dbReference type="PDB" id="4R02">
    <property type="method" value="X-ray"/>
    <property type="resolution" value="2.50 A"/>
    <property type="chains" value="H/V=30-261"/>
</dbReference>
<dbReference type="PDB" id="4R17">
    <property type="method" value="X-ray"/>
    <property type="resolution" value="2.10 A"/>
    <property type="chains" value="H/V=30-261"/>
</dbReference>
<dbReference type="PDB" id="4R18">
    <property type="method" value="X-ray"/>
    <property type="resolution" value="2.40 A"/>
    <property type="chains" value="H/V=30-261"/>
</dbReference>
<dbReference type="PDB" id="4RUR">
    <property type="method" value="X-ray"/>
    <property type="resolution" value="2.50 A"/>
    <property type="chains" value="H/V=30-261"/>
</dbReference>
<dbReference type="PDB" id="4V7O">
    <property type="method" value="X-ray"/>
    <property type="resolution" value="3.00 A"/>
    <property type="chains" value="AM/AY/BI/BW=30-251"/>
</dbReference>
<dbReference type="PDB" id="4X6Z">
    <property type="method" value="X-ray"/>
    <property type="resolution" value="2.70 A"/>
    <property type="chains" value="I/W=1-261"/>
</dbReference>
<dbReference type="PDB" id="4Y69">
    <property type="method" value="X-ray"/>
    <property type="resolution" value="2.90 A"/>
    <property type="chains" value="H/V=30-261"/>
</dbReference>
<dbReference type="PDB" id="4Y6A">
    <property type="method" value="X-ray"/>
    <property type="resolution" value="2.60 A"/>
    <property type="chains" value="H/V=30-261"/>
</dbReference>
<dbReference type="PDB" id="4Y6V">
    <property type="method" value="X-ray"/>
    <property type="resolution" value="2.80 A"/>
    <property type="chains" value="H/V=30-261"/>
</dbReference>
<dbReference type="PDB" id="4Y6Z">
    <property type="method" value="X-ray"/>
    <property type="resolution" value="2.70 A"/>
    <property type="chains" value="H/V=30-261"/>
</dbReference>
<dbReference type="PDB" id="4Y70">
    <property type="method" value="X-ray"/>
    <property type="resolution" value="2.40 A"/>
    <property type="chains" value="H/V=30-261"/>
</dbReference>
<dbReference type="PDB" id="4Y74">
    <property type="method" value="X-ray"/>
    <property type="resolution" value="2.70 A"/>
    <property type="chains" value="H/V=30-261"/>
</dbReference>
<dbReference type="PDB" id="4Y75">
    <property type="method" value="X-ray"/>
    <property type="resolution" value="2.80 A"/>
    <property type="chains" value="H/V=30-261"/>
</dbReference>
<dbReference type="PDB" id="4Y77">
    <property type="method" value="X-ray"/>
    <property type="resolution" value="2.50 A"/>
    <property type="chains" value="H/V=30-261"/>
</dbReference>
<dbReference type="PDB" id="4Y78">
    <property type="method" value="X-ray"/>
    <property type="resolution" value="2.80 A"/>
    <property type="chains" value="H/V=30-261"/>
</dbReference>
<dbReference type="PDB" id="4Y7W">
    <property type="method" value="X-ray"/>
    <property type="resolution" value="2.50 A"/>
    <property type="chains" value="H/V=30-261"/>
</dbReference>
<dbReference type="PDB" id="4Y7X">
    <property type="method" value="X-ray"/>
    <property type="resolution" value="2.60 A"/>
    <property type="chains" value="H/V=30-261"/>
</dbReference>
<dbReference type="PDB" id="4Y7Y">
    <property type="method" value="X-ray"/>
    <property type="resolution" value="2.40 A"/>
    <property type="chains" value="H/V=30-261"/>
</dbReference>
<dbReference type="PDB" id="4Y80">
    <property type="method" value="X-ray"/>
    <property type="resolution" value="2.50 A"/>
    <property type="chains" value="H/V=30-261"/>
</dbReference>
<dbReference type="PDB" id="4Y81">
    <property type="method" value="X-ray"/>
    <property type="resolution" value="2.80 A"/>
    <property type="chains" value="H/V=30-261"/>
</dbReference>
<dbReference type="PDB" id="4Y82">
    <property type="method" value="X-ray"/>
    <property type="resolution" value="2.80 A"/>
    <property type="chains" value="H/V=30-261"/>
</dbReference>
<dbReference type="PDB" id="4Y84">
    <property type="method" value="X-ray"/>
    <property type="resolution" value="2.70 A"/>
    <property type="chains" value="H/V=30-261"/>
</dbReference>
<dbReference type="PDB" id="4Y8G">
    <property type="method" value="X-ray"/>
    <property type="resolution" value="2.60 A"/>
    <property type="chains" value="H/V=30-261"/>
</dbReference>
<dbReference type="PDB" id="4Y8H">
    <property type="method" value="X-ray"/>
    <property type="resolution" value="2.50 A"/>
    <property type="chains" value="H/V=30-261"/>
</dbReference>
<dbReference type="PDB" id="4Y8I">
    <property type="method" value="X-ray"/>
    <property type="resolution" value="2.60 A"/>
    <property type="chains" value="H/V=30-261"/>
</dbReference>
<dbReference type="PDB" id="4Y8J">
    <property type="method" value="X-ray"/>
    <property type="resolution" value="2.70 A"/>
    <property type="chains" value="H/V=30-261"/>
</dbReference>
<dbReference type="PDB" id="4Y8K">
    <property type="method" value="X-ray"/>
    <property type="resolution" value="2.60 A"/>
    <property type="chains" value="H/V=30-261"/>
</dbReference>
<dbReference type="PDB" id="4Y8L">
    <property type="method" value="X-ray"/>
    <property type="resolution" value="2.40 A"/>
    <property type="chains" value="H/V=30-261"/>
</dbReference>
<dbReference type="PDB" id="4Y8M">
    <property type="method" value="X-ray"/>
    <property type="resolution" value="2.80 A"/>
    <property type="chains" value="H/V=30-261"/>
</dbReference>
<dbReference type="PDB" id="4Y8N">
    <property type="method" value="X-ray"/>
    <property type="resolution" value="2.60 A"/>
    <property type="chains" value="H/V=30-261"/>
</dbReference>
<dbReference type="PDB" id="4Y8O">
    <property type="method" value="X-ray"/>
    <property type="resolution" value="2.70 A"/>
    <property type="chains" value="H/V=30-261"/>
</dbReference>
<dbReference type="PDB" id="4Y8P">
    <property type="method" value="X-ray"/>
    <property type="resolution" value="2.80 A"/>
    <property type="chains" value="H/V=30-261"/>
</dbReference>
<dbReference type="PDB" id="4Y8Q">
    <property type="method" value="X-ray"/>
    <property type="resolution" value="2.60 A"/>
    <property type="chains" value="H/V=30-261"/>
</dbReference>
<dbReference type="PDB" id="4Y8R">
    <property type="method" value="X-ray"/>
    <property type="resolution" value="2.70 A"/>
    <property type="chains" value="H/V=30-261"/>
</dbReference>
<dbReference type="PDB" id="4Y8S">
    <property type="method" value="X-ray"/>
    <property type="resolution" value="2.70 A"/>
    <property type="chains" value="H/V=30-261"/>
</dbReference>
<dbReference type="PDB" id="4Y8T">
    <property type="method" value="X-ray"/>
    <property type="resolution" value="2.70 A"/>
    <property type="chains" value="H/V=30-261"/>
</dbReference>
<dbReference type="PDB" id="4Y8U">
    <property type="method" value="X-ray"/>
    <property type="resolution" value="2.90 A"/>
    <property type="chains" value="H/V=30-261"/>
</dbReference>
<dbReference type="PDB" id="4Y9Y">
    <property type="method" value="X-ray"/>
    <property type="resolution" value="2.80 A"/>
    <property type="chains" value="H/V=30-261"/>
</dbReference>
<dbReference type="PDB" id="4Y9Z">
    <property type="method" value="X-ray"/>
    <property type="resolution" value="2.80 A"/>
    <property type="chains" value="H/V=30-261"/>
</dbReference>
<dbReference type="PDB" id="4YA0">
    <property type="method" value="X-ray"/>
    <property type="resolution" value="2.80 A"/>
    <property type="chains" value="H/V=30-261"/>
</dbReference>
<dbReference type="PDB" id="4YA1">
    <property type="method" value="X-ray"/>
    <property type="resolution" value="2.90 A"/>
    <property type="chains" value="H/V=30-261"/>
</dbReference>
<dbReference type="PDB" id="4YA2">
    <property type="method" value="X-ray"/>
    <property type="resolution" value="2.70 A"/>
    <property type="chains" value="H/V=30-261"/>
</dbReference>
<dbReference type="PDB" id="4YA3">
    <property type="method" value="X-ray"/>
    <property type="resolution" value="2.70 A"/>
    <property type="chains" value="H/V=30-261"/>
</dbReference>
<dbReference type="PDB" id="4YA4">
    <property type="method" value="X-ray"/>
    <property type="resolution" value="2.90 A"/>
    <property type="chains" value="H/V=30-261"/>
</dbReference>
<dbReference type="PDB" id="4YA5">
    <property type="method" value="X-ray"/>
    <property type="resolution" value="2.50 A"/>
    <property type="chains" value="H/V=30-261"/>
</dbReference>
<dbReference type="PDB" id="4YA7">
    <property type="method" value="X-ray"/>
    <property type="resolution" value="2.70 A"/>
    <property type="chains" value="H/V=30-261"/>
</dbReference>
<dbReference type="PDB" id="4YA9">
    <property type="method" value="X-ray"/>
    <property type="resolution" value="2.70 A"/>
    <property type="chains" value="H/V=30-261"/>
</dbReference>
<dbReference type="PDB" id="4Z1L">
    <property type="method" value="X-ray"/>
    <property type="resolution" value="3.00 A"/>
    <property type="chains" value="H/V=30-261"/>
</dbReference>
<dbReference type="PDB" id="5A5B">
    <property type="method" value="EM"/>
    <property type="resolution" value="9.50 A"/>
    <property type="chains" value="2=1-261"/>
</dbReference>
<dbReference type="PDB" id="5AHJ">
    <property type="method" value="X-ray"/>
    <property type="resolution" value="2.80 A"/>
    <property type="chains" value="H/V=30-261"/>
</dbReference>
<dbReference type="PDB" id="5BOU">
    <property type="method" value="X-ray"/>
    <property type="resolution" value="2.60 A"/>
    <property type="chains" value="H/V=30-261"/>
</dbReference>
<dbReference type="PDB" id="5BXL">
    <property type="method" value="X-ray"/>
    <property type="resolution" value="2.80 A"/>
    <property type="chains" value="H/V=30-261"/>
</dbReference>
<dbReference type="PDB" id="5BXN">
    <property type="method" value="X-ray"/>
    <property type="resolution" value="2.80 A"/>
    <property type="chains" value="H/V=30-261"/>
</dbReference>
<dbReference type="PDB" id="5CGF">
    <property type="method" value="X-ray"/>
    <property type="resolution" value="2.80 A"/>
    <property type="chains" value="H/V=30-261"/>
</dbReference>
<dbReference type="PDB" id="5CGG">
    <property type="method" value="X-ray"/>
    <property type="resolution" value="2.90 A"/>
    <property type="chains" value="H/V=30-261"/>
</dbReference>
<dbReference type="PDB" id="5CGH">
    <property type="method" value="X-ray"/>
    <property type="resolution" value="2.50 A"/>
    <property type="chains" value="H/V=30-261"/>
</dbReference>
<dbReference type="PDB" id="5CGI">
    <property type="method" value="X-ray"/>
    <property type="resolution" value="2.80 A"/>
    <property type="chains" value="H/V=30-261"/>
</dbReference>
<dbReference type="PDB" id="5CZ4">
    <property type="method" value="X-ray"/>
    <property type="resolution" value="2.30 A"/>
    <property type="chains" value="H/V=30-261"/>
</dbReference>
<dbReference type="PDB" id="5CZ5">
    <property type="method" value="X-ray"/>
    <property type="resolution" value="2.80 A"/>
    <property type="chains" value="H/V=30-261"/>
</dbReference>
<dbReference type="PDB" id="5CZ6">
    <property type="method" value="X-ray"/>
    <property type="resolution" value="2.70 A"/>
    <property type="chains" value="H/V=30-261"/>
</dbReference>
<dbReference type="PDB" id="5CZ7">
    <property type="method" value="X-ray"/>
    <property type="resolution" value="2.50 A"/>
    <property type="chains" value="H/V=30-261"/>
</dbReference>
<dbReference type="PDB" id="5CZ8">
    <property type="method" value="X-ray"/>
    <property type="resolution" value="2.80 A"/>
    <property type="chains" value="H/V=30-261"/>
</dbReference>
<dbReference type="PDB" id="5CZ9">
    <property type="method" value="X-ray"/>
    <property type="resolution" value="2.90 A"/>
    <property type="chains" value="H/V=30-261"/>
</dbReference>
<dbReference type="PDB" id="5CZA">
    <property type="method" value="X-ray"/>
    <property type="resolution" value="2.50 A"/>
    <property type="chains" value="H/V=30-261"/>
</dbReference>
<dbReference type="PDB" id="5D0S">
    <property type="method" value="X-ray"/>
    <property type="resolution" value="2.50 A"/>
    <property type="chains" value="H/V=30-261"/>
</dbReference>
<dbReference type="PDB" id="5D0T">
    <property type="method" value="X-ray"/>
    <property type="resolution" value="2.60 A"/>
    <property type="chains" value="H/V=30-261"/>
</dbReference>
<dbReference type="PDB" id="5D0V">
    <property type="method" value="X-ray"/>
    <property type="resolution" value="2.90 A"/>
    <property type="chains" value="H/V=30-261"/>
</dbReference>
<dbReference type="PDB" id="5D0W">
    <property type="method" value="X-ray"/>
    <property type="resolution" value="2.80 A"/>
    <property type="chains" value="H/V=30-261"/>
</dbReference>
<dbReference type="PDB" id="5D0X">
    <property type="method" value="X-ray"/>
    <property type="resolution" value="2.60 A"/>
    <property type="chains" value="H/V=30-261"/>
</dbReference>
<dbReference type="PDB" id="5D0Z">
    <property type="method" value="X-ray"/>
    <property type="resolution" value="2.90 A"/>
    <property type="chains" value="H/V=30-261"/>
</dbReference>
<dbReference type="PDB" id="5DKI">
    <property type="method" value="X-ray"/>
    <property type="resolution" value="2.80 A"/>
    <property type="chains" value="H/V=30-261"/>
</dbReference>
<dbReference type="PDB" id="5DKJ">
    <property type="method" value="X-ray"/>
    <property type="resolution" value="2.80 A"/>
    <property type="chains" value="H/V=30-261"/>
</dbReference>
<dbReference type="PDB" id="5FG7">
    <property type="method" value="X-ray"/>
    <property type="resolution" value="2.70 A"/>
    <property type="chains" value="H/V=24-261"/>
</dbReference>
<dbReference type="PDB" id="5FG9">
    <property type="method" value="X-ray"/>
    <property type="resolution" value="2.60 A"/>
    <property type="chains" value="H/V=26-261"/>
</dbReference>
<dbReference type="PDB" id="5FGA">
    <property type="method" value="X-ray"/>
    <property type="resolution" value="2.70 A"/>
    <property type="chains" value="H/V=30-261"/>
</dbReference>
<dbReference type="PDB" id="5FGD">
    <property type="method" value="X-ray"/>
    <property type="resolution" value="2.80 A"/>
    <property type="chains" value="H/V=30-261"/>
</dbReference>
<dbReference type="PDB" id="5FGE">
    <property type="method" value="X-ray"/>
    <property type="resolution" value="2.60 A"/>
    <property type="chains" value="H/V=30-261"/>
</dbReference>
<dbReference type="PDB" id="5FGF">
    <property type="method" value="X-ray"/>
    <property type="resolution" value="2.60 A"/>
    <property type="chains" value="H/V=30-261"/>
</dbReference>
<dbReference type="PDB" id="5FGG">
    <property type="method" value="X-ray"/>
    <property type="resolution" value="2.70 A"/>
    <property type="chains" value="H/V=30-261"/>
</dbReference>
<dbReference type="PDB" id="5FGH">
    <property type="method" value="X-ray"/>
    <property type="resolution" value="2.80 A"/>
    <property type="chains" value="H/V=30-261"/>
</dbReference>
<dbReference type="PDB" id="5FGI">
    <property type="method" value="X-ray"/>
    <property type="resolution" value="2.90 A"/>
    <property type="chains" value="H/V=18-261"/>
</dbReference>
<dbReference type="PDB" id="5FHS">
    <property type="method" value="X-ray"/>
    <property type="resolution" value="2.70 A"/>
    <property type="chains" value="H/V=30-261"/>
</dbReference>
<dbReference type="PDB" id="5JHR">
    <property type="method" value="X-ray"/>
    <property type="resolution" value="2.90 A"/>
    <property type="chains" value="H/V=30-261"/>
</dbReference>
<dbReference type="PDB" id="5JHS">
    <property type="method" value="X-ray"/>
    <property type="resolution" value="3.00 A"/>
    <property type="chains" value="H/V=30-261"/>
</dbReference>
<dbReference type="PDB" id="5L52">
    <property type="method" value="X-ray"/>
    <property type="resolution" value="2.70 A"/>
    <property type="chains" value="H/V=30-261"/>
</dbReference>
<dbReference type="PDB" id="5L54">
    <property type="method" value="X-ray"/>
    <property type="resolution" value="2.80 A"/>
    <property type="chains" value="H/V=30-261"/>
</dbReference>
<dbReference type="PDB" id="5L55">
    <property type="method" value="X-ray"/>
    <property type="resolution" value="2.90 A"/>
    <property type="chains" value="H/V=30-261"/>
</dbReference>
<dbReference type="PDB" id="5L5A">
    <property type="method" value="X-ray"/>
    <property type="resolution" value="2.40 A"/>
    <property type="chains" value="H/V=30-261"/>
</dbReference>
<dbReference type="PDB" id="5L5B">
    <property type="method" value="X-ray"/>
    <property type="resolution" value="2.80 A"/>
    <property type="chains" value="H/V=30-261"/>
</dbReference>
<dbReference type="PDB" id="5L5D">
    <property type="method" value="X-ray"/>
    <property type="resolution" value="2.80 A"/>
    <property type="chains" value="H/V=30-261"/>
</dbReference>
<dbReference type="PDB" id="5L5E">
    <property type="method" value="X-ray"/>
    <property type="resolution" value="2.90 A"/>
    <property type="chains" value="H/V=30-261"/>
</dbReference>
<dbReference type="PDB" id="5L5F">
    <property type="method" value="X-ray"/>
    <property type="resolution" value="2.50 A"/>
    <property type="chains" value="H/V=30-261"/>
</dbReference>
<dbReference type="PDB" id="5L5H">
    <property type="method" value="X-ray"/>
    <property type="resolution" value="2.60 A"/>
    <property type="chains" value="H/V=30-261"/>
</dbReference>
<dbReference type="PDB" id="5L5I">
    <property type="method" value="X-ray"/>
    <property type="resolution" value="2.90 A"/>
    <property type="chains" value="H/V=30-261"/>
</dbReference>
<dbReference type="PDB" id="5L5J">
    <property type="method" value="X-ray"/>
    <property type="resolution" value="2.90 A"/>
    <property type="chains" value="H/V=30-261"/>
</dbReference>
<dbReference type="PDB" id="5L5O">
    <property type="method" value="X-ray"/>
    <property type="resolution" value="2.60 A"/>
    <property type="chains" value="H/V=30-261"/>
</dbReference>
<dbReference type="PDB" id="5L5P">
    <property type="method" value="X-ray"/>
    <property type="resolution" value="2.80 A"/>
    <property type="chains" value="H/V=30-261"/>
</dbReference>
<dbReference type="PDB" id="5L5Q">
    <property type="method" value="X-ray"/>
    <property type="resolution" value="2.80 A"/>
    <property type="chains" value="H/V=30-261"/>
</dbReference>
<dbReference type="PDB" id="5L5R">
    <property type="method" value="X-ray"/>
    <property type="resolution" value="2.90 A"/>
    <property type="chains" value="H/V=30-261"/>
</dbReference>
<dbReference type="PDB" id="5L5S">
    <property type="method" value="X-ray"/>
    <property type="resolution" value="2.60 A"/>
    <property type="chains" value="H/V=30-261"/>
</dbReference>
<dbReference type="PDB" id="5L5T">
    <property type="method" value="X-ray"/>
    <property type="resolution" value="2.90 A"/>
    <property type="chains" value="H/V=30-261"/>
</dbReference>
<dbReference type="PDB" id="5L5U">
    <property type="method" value="X-ray"/>
    <property type="resolution" value="2.60 A"/>
    <property type="chains" value="H/V=30-261"/>
</dbReference>
<dbReference type="PDB" id="5L5V">
    <property type="method" value="X-ray"/>
    <property type="resolution" value="2.70 A"/>
    <property type="chains" value="H/V=30-261"/>
</dbReference>
<dbReference type="PDB" id="5L5W">
    <property type="method" value="X-ray"/>
    <property type="resolution" value="2.80 A"/>
    <property type="chains" value="H/V=30-261"/>
</dbReference>
<dbReference type="PDB" id="5L5X">
    <property type="method" value="X-ray"/>
    <property type="resolution" value="2.90 A"/>
    <property type="chains" value="H/V=30-261"/>
</dbReference>
<dbReference type="PDB" id="5L5Y">
    <property type="method" value="X-ray"/>
    <property type="resolution" value="2.70 A"/>
    <property type="chains" value="H/V=30-261"/>
</dbReference>
<dbReference type="PDB" id="5L5Z">
    <property type="method" value="X-ray"/>
    <property type="resolution" value="2.70 A"/>
    <property type="chains" value="H/V=30-261"/>
</dbReference>
<dbReference type="PDB" id="5L60">
    <property type="method" value="X-ray"/>
    <property type="resolution" value="2.70 A"/>
    <property type="chains" value="H/V=30-261"/>
</dbReference>
<dbReference type="PDB" id="5L61">
    <property type="method" value="X-ray"/>
    <property type="resolution" value="2.80 A"/>
    <property type="chains" value="H/V=30-261"/>
</dbReference>
<dbReference type="PDB" id="5L62">
    <property type="method" value="X-ray"/>
    <property type="resolution" value="2.80 A"/>
    <property type="chains" value="H/V=30-261"/>
</dbReference>
<dbReference type="PDB" id="5L63">
    <property type="method" value="X-ray"/>
    <property type="resolution" value="2.70 A"/>
    <property type="chains" value="H/V=30-261"/>
</dbReference>
<dbReference type="PDB" id="5L64">
    <property type="method" value="X-ray"/>
    <property type="resolution" value="2.70 A"/>
    <property type="chains" value="H/V=30-261"/>
</dbReference>
<dbReference type="PDB" id="5L65">
    <property type="method" value="X-ray"/>
    <property type="resolution" value="2.90 A"/>
    <property type="chains" value="H/V=30-261"/>
</dbReference>
<dbReference type="PDB" id="5L66">
    <property type="method" value="X-ray"/>
    <property type="resolution" value="2.80 A"/>
    <property type="chains" value="H/V=30-261"/>
</dbReference>
<dbReference type="PDB" id="5L67">
    <property type="method" value="X-ray"/>
    <property type="resolution" value="2.60 A"/>
    <property type="chains" value="H/V=30-261"/>
</dbReference>
<dbReference type="PDB" id="5L68">
    <property type="method" value="X-ray"/>
    <property type="resolution" value="2.80 A"/>
    <property type="chains" value="H/V=30-261"/>
</dbReference>
<dbReference type="PDB" id="5L69">
    <property type="method" value="X-ray"/>
    <property type="resolution" value="2.70 A"/>
    <property type="chains" value="H/V=30-261"/>
</dbReference>
<dbReference type="PDB" id="5L6A">
    <property type="method" value="X-ray"/>
    <property type="resolution" value="2.80 A"/>
    <property type="chains" value="H/V=30-261"/>
</dbReference>
<dbReference type="PDB" id="5L6B">
    <property type="method" value="X-ray"/>
    <property type="resolution" value="2.60 A"/>
    <property type="chains" value="H/V=30-261"/>
</dbReference>
<dbReference type="PDB" id="5L6C">
    <property type="method" value="X-ray"/>
    <property type="resolution" value="2.60 A"/>
    <property type="chains" value="H/V=30-261"/>
</dbReference>
<dbReference type="PDB" id="5LAI">
    <property type="method" value="X-ray"/>
    <property type="resolution" value="2.50 A"/>
    <property type="chains" value="H/V=30-261"/>
</dbReference>
<dbReference type="PDB" id="5LAJ">
    <property type="method" value="X-ray"/>
    <property type="resolution" value="2.90 A"/>
    <property type="chains" value="H/V=30-261"/>
</dbReference>
<dbReference type="PDB" id="5LTT">
    <property type="method" value="X-ray"/>
    <property type="resolution" value="2.70 A"/>
    <property type="chains" value="H/V=30-261"/>
</dbReference>
<dbReference type="PDB" id="5M2B">
    <property type="method" value="X-ray"/>
    <property type="resolution" value="2.70 A"/>
    <property type="chains" value="H/V=30-261"/>
</dbReference>
<dbReference type="PDB" id="5MP9">
    <property type="method" value="EM"/>
    <property type="resolution" value="4.10 A"/>
    <property type="chains" value="2/i=1-261"/>
</dbReference>
<dbReference type="PDB" id="5MPA">
    <property type="method" value="EM"/>
    <property type="resolution" value="4.50 A"/>
    <property type="chains" value="2/i=1-261"/>
</dbReference>
<dbReference type="PDB" id="5MPB">
    <property type="method" value="EM"/>
    <property type="resolution" value="7.80 A"/>
    <property type="chains" value="2/i=1-261"/>
</dbReference>
<dbReference type="PDB" id="5MPC">
    <property type="method" value="EM"/>
    <property type="resolution" value="7.70 A"/>
    <property type="chains" value="2/i=1-261"/>
</dbReference>
<dbReference type="PDB" id="5NIF">
    <property type="method" value="X-ray"/>
    <property type="resolution" value="3.00 A"/>
    <property type="chains" value="I/W=1-261"/>
</dbReference>
<dbReference type="PDB" id="5WVI">
    <property type="method" value="EM"/>
    <property type="resolution" value="6.30 A"/>
    <property type="chains" value="2/i=1-261"/>
</dbReference>
<dbReference type="PDB" id="5WVK">
    <property type="method" value="EM"/>
    <property type="resolution" value="4.20 A"/>
    <property type="chains" value="2/i=1-261"/>
</dbReference>
<dbReference type="PDB" id="6EF3">
    <property type="method" value="EM"/>
    <property type="resolution" value="4.17 A"/>
    <property type="chains" value="2=1-261"/>
</dbReference>
<dbReference type="PDB" id="6FVT">
    <property type="method" value="EM"/>
    <property type="resolution" value="4.10 A"/>
    <property type="chains" value="2/i=30-255"/>
</dbReference>
<dbReference type="PDB" id="6FVU">
    <property type="method" value="EM"/>
    <property type="resolution" value="4.50 A"/>
    <property type="chains" value="2/i=30-255"/>
</dbReference>
<dbReference type="PDB" id="6FVV">
    <property type="method" value="EM"/>
    <property type="resolution" value="5.40 A"/>
    <property type="chains" value="2/i=30-255"/>
</dbReference>
<dbReference type="PDB" id="6FVW">
    <property type="method" value="EM"/>
    <property type="resolution" value="4.50 A"/>
    <property type="chains" value="2/i=30-255"/>
</dbReference>
<dbReference type="PDB" id="6FVX">
    <property type="method" value="EM"/>
    <property type="resolution" value="4.90 A"/>
    <property type="chains" value="2/i=30-255"/>
</dbReference>
<dbReference type="PDB" id="6FVY">
    <property type="method" value="EM"/>
    <property type="resolution" value="6.10 A"/>
    <property type="chains" value="2/i=30-255"/>
</dbReference>
<dbReference type="PDB" id="6G7F">
    <property type="method" value="X-ray"/>
    <property type="resolution" value="2.70 A"/>
    <property type="chains" value="H/V=30-261"/>
</dbReference>
<dbReference type="PDB" id="6G8M">
    <property type="method" value="X-ray"/>
    <property type="resolution" value="2.70 A"/>
    <property type="chains" value="H/V=30-261"/>
</dbReference>
<dbReference type="PDB" id="6G8N">
    <property type="method" value="X-ray"/>
    <property type="resolution" value="3.00 A"/>
    <property type="chains" value="H/V=30-261"/>
</dbReference>
<dbReference type="PDB" id="6GOP">
    <property type="method" value="X-ray"/>
    <property type="resolution" value="2.90 A"/>
    <property type="chains" value="H/V=30-261"/>
</dbReference>
<dbReference type="PDB" id="6H39">
    <property type="method" value="X-ray"/>
    <property type="resolution" value="2.50 A"/>
    <property type="chains" value="H/V=30-261"/>
</dbReference>
<dbReference type="PDB" id="6HV3">
    <property type="method" value="X-ray"/>
    <property type="resolution" value="2.70 A"/>
    <property type="chains" value="H/V=83-255"/>
</dbReference>
<dbReference type="PDB" id="6HV4">
    <property type="method" value="X-ray"/>
    <property type="resolution" value="3.00 A"/>
    <property type="chains" value="H/V=83-255"/>
</dbReference>
<dbReference type="PDB" id="6HV5">
    <property type="method" value="X-ray"/>
    <property type="resolution" value="3.00 A"/>
    <property type="chains" value="H/V=83-255"/>
</dbReference>
<dbReference type="PDB" id="6HV7">
    <property type="method" value="X-ray"/>
    <property type="resolution" value="3.40 A"/>
    <property type="chains" value="H/V=83-255"/>
</dbReference>
<dbReference type="PDB" id="6HVA">
    <property type="method" value="X-ray"/>
    <property type="resolution" value="2.90 A"/>
    <property type="chains" value="H/V=83-255"/>
</dbReference>
<dbReference type="PDB" id="6HVR">
    <property type="method" value="X-ray"/>
    <property type="resolution" value="2.70 A"/>
    <property type="chains" value="H/V=83-255"/>
</dbReference>
<dbReference type="PDB" id="6HVS">
    <property type="method" value="X-ray"/>
    <property type="resolution" value="3.10 A"/>
    <property type="chains" value="H/V=83-255"/>
</dbReference>
<dbReference type="PDB" id="6HVT">
    <property type="method" value="X-ray"/>
    <property type="resolution" value="2.90 A"/>
    <property type="chains" value="H/V=83-255"/>
</dbReference>
<dbReference type="PDB" id="6HVU">
    <property type="method" value="X-ray"/>
    <property type="resolution" value="2.90 A"/>
    <property type="chains" value="H/V=83-255"/>
</dbReference>
<dbReference type="PDB" id="6HVV">
    <property type="method" value="X-ray"/>
    <property type="resolution" value="2.70 A"/>
    <property type="chains" value="H/V=83-255"/>
</dbReference>
<dbReference type="PDB" id="6HVW">
    <property type="method" value="X-ray"/>
    <property type="resolution" value="3.00 A"/>
    <property type="chains" value="H/V=83-255"/>
</dbReference>
<dbReference type="PDB" id="6HVX">
    <property type="method" value="X-ray"/>
    <property type="resolution" value="2.80 A"/>
    <property type="chains" value="H/V=30-261"/>
</dbReference>
<dbReference type="PDB" id="6HVY">
    <property type="method" value="X-ray"/>
    <property type="resolution" value="2.70 A"/>
    <property type="chains" value="H/V=30-261"/>
</dbReference>
<dbReference type="PDB" id="6HW0">
    <property type="method" value="X-ray"/>
    <property type="resolution" value="2.80 A"/>
    <property type="chains" value="H/V=30-261"/>
</dbReference>
<dbReference type="PDB" id="6HW3">
    <property type="method" value="X-ray"/>
    <property type="resolution" value="2.60 A"/>
    <property type="chains" value="H/V=30-261"/>
</dbReference>
<dbReference type="PDB" id="6HW4">
    <property type="method" value="X-ray"/>
    <property type="resolution" value="2.90 A"/>
    <property type="chains" value="H/V=30-261"/>
</dbReference>
<dbReference type="PDB" id="6HW5">
    <property type="method" value="X-ray"/>
    <property type="resolution" value="2.90 A"/>
    <property type="chains" value="H/V=30-261"/>
</dbReference>
<dbReference type="PDB" id="6HW6">
    <property type="method" value="X-ray"/>
    <property type="resolution" value="2.70 A"/>
    <property type="chains" value="H/V=30-261"/>
</dbReference>
<dbReference type="PDB" id="6HW7">
    <property type="method" value="X-ray"/>
    <property type="resolution" value="2.70 A"/>
    <property type="chains" value="H/V=30-261"/>
</dbReference>
<dbReference type="PDB" id="6HW8">
    <property type="method" value="X-ray"/>
    <property type="resolution" value="2.80 A"/>
    <property type="chains" value="H/V=30-261"/>
</dbReference>
<dbReference type="PDB" id="6HW9">
    <property type="method" value="X-ray"/>
    <property type="resolution" value="2.80 A"/>
    <property type="chains" value="H/V=30-261"/>
</dbReference>
<dbReference type="PDB" id="6HWA">
    <property type="method" value="X-ray"/>
    <property type="resolution" value="2.80 A"/>
    <property type="chains" value="H/V=30-261"/>
</dbReference>
<dbReference type="PDB" id="6HWB">
    <property type="method" value="X-ray"/>
    <property type="resolution" value="2.60 A"/>
    <property type="chains" value="H/V=30-261"/>
</dbReference>
<dbReference type="PDB" id="6HWC">
    <property type="method" value="X-ray"/>
    <property type="resolution" value="2.80 A"/>
    <property type="chains" value="H/V=30-261"/>
</dbReference>
<dbReference type="PDB" id="6HWD">
    <property type="method" value="X-ray"/>
    <property type="resolution" value="2.80 A"/>
    <property type="chains" value="H/V=30-261"/>
</dbReference>
<dbReference type="PDB" id="6HWE">
    <property type="method" value="X-ray"/>
    <property type="resolution" value="2.30 A"/>
    <property type="chains" value="H/V=30-261"/>
</dbReference>
<dbReference type="PDB" id="6HWF">
    <property type="method" value="X-ray"/>
    <property type="resolution" value="2.50 A"/>
    <property type="chains" value="H/V=30-261"/>
</dbReference>
<dbReference type="PDB" id="6J2C">
    <property type="method" value="EM"/>
    <property type="resolution" value="7.00 A"/>
    <property type="chains" value="2/i=1-261"/>
</dbReference>
<dbReference type="PDB" id="6J2N">
    <property type="method" value="EM"/>
    <property type="resolution" value="7.50 A"/>
    <property type="chains" value="2/i=1-261"/>
</dbReference>
<dbReference type="PDB" id="6J2Q">
    <property type="method" value="EM"/>
    <property type="resolution" value="3.80 A"/>
    <property type="chains" value="2/i=1-261"/>
</dbReference>
<dbReference type="PDB" id="6J2X">
    <property type="method" value="EM"/>
    <property type="resolution" value="3.80 A"/>
    <property type="chains" value="2/i=1-261"/>
</dbReference>
<dbReference type="PDB" id="6J30">
    <property type="method" value="EM"/>
    <property type="resolution" value="4.50 A"/>
    <property type="chains" value="2/i=1-261"/>
</dbReference>
<dbReference type="PDB" id="6ZOU">
    <property type="method" value="X-ray"/>
    <property type="resolution" value="2.90 A"/>
    <property type="chains" value="H/V=30-261"/>
</dbReference>
<dbReference type="PDB" id="6ZP6">
    <property type="method" value="X-ray"/>
    <property type="resolution" value="2.80 A"/>
    <property type="chains" value="H/V=30-261"/>
</dbReference>
<dbReference type="PDB" id="6ZP8">
    <property type="method" value="X-ray"/>
    <property type="resolution" value="3.00 A"/>
    <property type="chains" value="H/V=30-261"/>
</dbReference>
<dbReference type="PDB" id="7LS5">
    <property type="method" value="EM"/>
    <property type="resolution" value="2.74 A"/>
    <property type="chains" value="I/W=1-261"/>
</dbReference>
<dbReference type="PDB" id="7LS6">
    <property type="method" value="EM"/>
    <property type="resolution" value="3.17 A"/>
    <property type="chains" value="I=1-261"/>
</dbReference>
<dbReference type="PDB" id="7LSX">
    <property type="method" value="EM"/>
    <property type="resolution" value="3.61 A"/>
    <property type="chains" value="I=1-261"/>
</dbReference>
<dbReference type="PDB" id="7O2L">
    <property type="method" value="X-ray"/>
    <property type="resolution" value="3.00 A"/>
    <property type="chains" value="H/V=30-261"/>
</dbReference>
<dbReference type="PDB" id="7QO3">
    <property type="method" value="EM"/>
    <property type="resolution" value="6.10 A"/>
    <property type="chains" value="2/i=1-261"/>
</dbReference>
<dbReference type="PDB" id="7QO5">
    <property type="method" value="EM"/>
    <property type="resolution" value="6.00 A"/>
    <property type="chains" value="2/i=1-261"/>
</dbReference>
<dbReference type="PDB" id="7TEJ">
    <property type="method" value="EM"/>
    <property type="resolution" value="2.74 A"/>
    <property type="chains" value="I/W=1-261"/>
</dbReference>
<dbReference type="PDB" id="7TEO">
    <property type="method" value="EM"/>
    <property type="resolution" value="2.97 A"/>
    <property type="chains" value="I/W=1-261"/>
</dbReference>
<dbReference type="PDB" id="8BW1">
    <property type="method" value="X-ray"/>
    <property type="resolution" value="3.25 A"/>
    <property type="chains" value="H/V=30-261"/>
</dbReference>
<dbReference type="PDB" id="8OHZ">
    <property type="method" value="X-ray"/>
    <property type="resolution" value="2.65 A"/>
    <property type="chains" value="H/V=30-261"/>
</dbReference>
<dbReference type="PDB" id="8OI1">
    <property type="method" value="X-ray"/>
    <property type="resolution" value="2.95 A"/>
    <property type="chains" value="H/V=30-261"/>
</dbReference>
<dbReference type="PDB" id="8OLR">
    <property type="method" value="X-ray"/>
    <property type="resolution" value="2.80 A"/>
    <property type="chains" value="H/V=30-261"/>
</dbReference>
<dbReference type="PDB" id="8RHJ">
    <property type="method" value="X-ray"/>
    <property type="resolution" value="3.05 A"/>
    <property type="chains" value="H/V=30-261"/>
</dbReference>
<dbReference type="PDB" id="8RHK">
    <property type="method" value="X-ray"/>
    <property type="resolution" value="2.80 A"/>
    <property type="chains" value="H/V=30-261"/>
</dbReference>
<dbReference type="PDB" id="8RHL">
    <property type="method" value="X-ray"/>
    <property type="resolution" value="3.20 A"/>
    <property type="chains" value="H/V=30-261"/>
</dbReference>
<dbReference type="PDB" id="8RVL">
    <property type="method" value="EM"/>
    <property type="resolution" value="2.14 A"/>
    <property type="chains" value="I/W=1-261"/>
</dbReference>
<dbReference type="PDB" id="8RVO">
    <property type="method" value="EM"/>
    <property type="resolution" value="2.69 A"/>
    <property type="chains" value="I/W=1-260"/>
</dbReference>
<dbReference type="PDB" id="8RVP">
    <property type="method" value="EM"/>
    <property type="resolution" value="2.28 A"/>
    <property type="chains" value="I/W=1-260"/>
</dbReference>
<dbReference type="PDB" id="8RVQ">
    <property type="method" value="EM"/>
    <property type="resolution" value="2.02 A"/>
    <property type="chains" value="I/W=30-261"/>
</dbReference>
<dbReference type="PDB" id="8T08">
    <property type="method" value="EM"/>
    <property type="resolution" value="3.00 A"/>
    <property type="chains" value="I/Z=1-261"/>
</dbReference>
<dbReference type="PDB" id="8T0M">
    <property type="method" value="EM"/>
    <property type="resolution" value="2.40 A"/>
    <property type="chains" value="I/W=1-261"/>
</dbReference>
<dbReference type="PDB" id="8U6Y">
    <property type="method" value="EM"/>
    <property type="resolution" value="2.80 A"/>
    <property type="chains" value="I/Z=1-261"/>
</dbReference>
<dbReference type="PDB" id="8U7U">
    <property type="method" value="EM"/>
    <property type="resolution" value="2.16 A"/>
    <property type="chains" value="I/W=1-261"/>
</dbReference>
<dbReference type="PDB" id="9D0T">
    <property type="method" value="EM"/>
    <property type="resolution" value="2.84 A"/>
    <property type="chains" value="I=1-261"/>
</dbReference>
<dbReference type="PDB" id="9FST">
    <property type="method" value="X-ray"/>
    <property type="resolution" value="2.75 A"/>
    <property type="chains" value="H/V=30-261"/>
</dbReference>
<dbReference type="PDB" id="9FSV">
    <property type="method" value="X-ray"/>
    <property type="resolution" value="2.75 A"/>
    <property type="chains" value="H/V=83-255"/>
</dbReference>
<dbReference type="PDB" id="9FT0">
    <property type="method" value="X-ray"/>
    <property type="resolution" value="2.75 A"/>
    <property type="chains" value="H/V=31-261"/>
</dbReference>
<dbReference type="PDB" id="9FT1">
    <property type="method" value="X-ray"/>
    <property type="resolution" value="2.60 A"/>
    <property type="chains" value="H/V=31-261"/>
</dbReference>
<dbReference type="PDB" id="9GBK">
    <property type="method" value="EM"/>
    <property type="resolution" value="2.39 A"/>
    <property type="chains" value="I/W=30-261"/>
</dbReference>
<dbReference type="PDBsum" id="1FNT"/>
<dbReference type="PDBsum" id="1G0U"/>
<dbReference type="PDBsum" id="1G65"/>
<dbReference type="PDBsum" id="1JD2"/>
<dbReference type="PDBsum" id="1RYP"/>
<dbReference type="PDBsum" id="1Z7Q"/>
<dbReference type="PDBsum" id="2F16"/>
<dbReference type="PDBsum" id="2FAK"/>
<dbReference type="PDBsum" id="2GPL"/>
<dbReference type="PDBsum" id="2ZCY"/>
<dbReference type="PDBsum" id="3BDM"/>
<dbReference type="PDBsum" id="3D29"/>
<dbReference type="PDBsum" id="3DY3"/>
<dbReference type="PDBsum" id="3DY4"/>
<dbReference type="PDBsum" id="3E47"/>
<dbReference type="PDBsum" id="3GPJ"/>
<dbReference type="PDBsum" id="3GPT"/>
<dbReference type="PDBsum" id="3GPW"/>
<dbReference type="PDBsum" id="3HYE"/>
<dbReference type="PDBsum" id="3JCO"/>
<dbReference type="PDBsum" id="3JCP"/>
<dbReference type="PDBsum" id="3MG0"/>
<dbReference type="PDBsum" id="3MG4"/>
<dbReference type="PDBsum" id="3MG6"/>
<dbReference type="PDBsum" id="3MG7"/>
<dbReference type="PDBsum" id="3MG8"/>
<dbReference type="PDBsum" id="3NZJ"/>
<dbReference type="PDBsum" id="3NZW"/>
<dbReference type="PDBsum" id="3NZX"/>
<dbReference type="PDBsum" id="3OEU"/>
<dbReference type="PDBsum" id="3OEV"/>
<dbReference type="PDBsum" id="3OKJ"/>
<dbReference type="PDBsum" id="3SDI"/>
<dbReference type="PDBsum" id="3SDK"/>
<dbReference type="PDBsum" id="3SHJ"/>
<dbReference type="PDBsum" id="3TDD"/>
<dbReference type="PDBsum" id="3UN4"/>
<dbReference type="PDBsum" id="3UN8"/>
<dbReference type="PDBsum" id="3WXR"/>
<dbReference type="PDBsum" id="4CR2"/>
<dbReference type="PDBsum" id="4CR3"/>
<dbReference type="PDBsum" id="4CR4"/>
<dbReference type="PDBsum" id="4EU2"/>
<dbReference type="PDBsum" id="4FZC"/>
<dbReference type="PDBsum" id="4FZG"/>
<dbReference type="PDBsum" id="4G4S"/>
<dbReference type="PDBsum" id="4GK7"/>
<dbReference type="PDBsum" id="4HNP"/>
<dbReference type="PDBsum" id="4HRC"/>
<dbReference type="PDBsum" id="4HRD"/>
<dbReference type="PDBsum" id="4INR"/>
<dbReference type="PDBsum" id="4INT"/>
<dbReference type="PDBsum" id="4INU"/>
<dbReference type="PDBsum" id="4J70"/>
<dbReference type="PDBsum" id="4JSQ"/>
<dbReference type="PDBsum" id="4JSU"/>
<dbReference type="PDBsum" id="4JT0"/>
<dbReference type="PDBsum" id="4LQI"/>
<dbReference type="PDBsum" id="4LTC"/>
<dbReference type="PDBsum" id="4NNN"/>
<dbReference type="PDBsum" id="4NNW"/>
<dbReference type="PDBsum" id="4NO1"/>
<dbReference type="PDBsum" id="4NO6"/>
<dbReference type="PDBsum" id="4NO8"/>
<dbReference type="PDBsum" id="4NO9"/>
<dbReference type="PDBsum" id="4Q1S"/>
<dbReference type="PDBsum" id="4QBY"/>
<dbReference type="PDBsum" id="4QLQ"/>
<dbReference type="PDBsum" id="4QLS"/>
<dbReference type="PDBsum" id="4QLT"/>
<dbReference type="PDBsum" id="4QLU"/>
<dbReference type="PDBsum" id="4QLV"/>
<dbReference type="PDBsum" id="4QUX"/>
<dbReference type="PDBsum" id="4QUY"/>
<dbReference type="PDBsum" id="4QV0"/>
<dbReference type="PDBsum" id="4QV1"/>
<dbReference type="PDBsum" id="4QV3"/>
<dbReference type="PDBsum" id="4QV4"/>
<dbReference type="PDBsum" id="4QV5"/>
<dbReference type="PDBsum" id="4QV6"/>
<dbReference type="PDBsum" id="4QV7"/>
<dbReference type="PDBsum" id="4QV8"/>
<dbReference type="PDBsum" id="4QV9"/>
<dbReference type="PDBsum" id="4QVL"/>
<dbReference type="PDBsum" id="4QVM"/>
<dbReference type="PDBsum" id="4QVN"/>
<dbReference type="PDBsum" id="4QVP"/>
<dbReference type="PDBsum" id="4QVQ"/>
<dbReference type="PDBsum" id="4QVV"/>
<dbReference type="PDBsum" id="4QVW"/>
<dbReference type="PDBsum" id="4QVY"/>
<dbReference type="PDBsum" id="4QW0"/>
<dbReference type="PDBsum" id="4QW1"/>
<dbReference type="PDBsum" id="4QW3"/>
<dbReference type="PDBsum" id="4QW4"/>
<dbReference type="PDBsum" id="4QW5"/>
<dbReference type="PDBsum" id="4QW6"/>
<dbReference type="PDBsum" id="4QW7"/>
<dbReference type="PDBsum" id="4QWF"/>
<dbReference type="PDBsum" id="4QWG"/>
<dbReference type="PDBsum" id="4QWI"/>
<dbReference type="PDBsum" id="4QWJ"/>
<dbReference type="PDBsum" id="4QWK"/>
<dbReference type="PDBsum" id="4QWL"/>
<dbReference type="PDBsum" id="4QWR"/>
<dbReference type="PDBsum" id="4QWS"/>
<dbReference type="PDBsum" id="4QWU"/>
<dbReference type="PDBsum" id="4QWX"/>
<dbReference type="PDBsum" id="4QXJ"/>
<dbReference type="PDBsum" id="4QZ0"/>
<dbReference type="PDBsum" id="4QZ1"/>
<dbReference type="PDBsum" id="4QZ2"/>
<dbReference type="PDBsum" id="4QZ3"/>
<dbReference type="PDBsum" id="4QZ4"/>
<dbReference type="PDBsum" id="4QZ5"/>
<dbReference type="PDBsum" id="4QZ6"/>
<dbReference type="PDBsum" id="4QZ7"/>
<dbReference type="PDBsum" id="4QZW"/>
<dbReference type="PDBsum" id="4QZX"/>
<dbReference type="PDBsum" id="4QZZ"/>
<dbReference type="PDBsum" id="4R00"/>
<dbReference type="PDBsum" id="4R02"/>
<dbReference type="PDBsum" id="4R17"/>
<dbReference type="PDBsum" id="4R18"/>
<dbReference type="PDBsum" id="4RUR"/>
<dbReference type="PDBsum" id="4V7O"/>
<dbReference type="PDBsum" id="4X6Z"/>
<dbReference type="PDBsum" id="4Y69"/>
<dbReference type="PDBsum" id="4Y6A"/>
<dbReference type="PDBsum" id="4Y6V"/>
<dbReference type="PDBsum" id="4Y6Z"/>
<dbReference type="PDBsum" id="4Y70"/>
<dbReference type="PDBsum" id="4Y74"/>
<dbReference type="PDBsum" id="4Y75"/>
<dbReference type="PDBsum" id="4Y77"/>
<dbReference type="PDBsum" id="4Y78"/>
<dbReference type="PDBsum" id="4Y7W"/>
<dbReference type="PDBsum" id="4Y7X"/>
<dbReference type="PDBsum" id="4Y7Y"/>
<dbReference type="PDBsum" id="4Y80"/>
<dbReference type="PDBsum" id="4Y81"/>
<dbReference type="PDBsum" id="4Y82"/>
<dbReference type="PDBsum" id="4Y84"/>
<dbReference type="PDBsum" id="4Y8G"/>
<dbReference type="PDBsum" id="4Y8H"/>
<dbReference type="PDBsum" id="4Y8I"/>
<dbReference type="PDBsum" id="4Y8J"/>
<dbReference type="PDBsum" id="4Y8K"/>
<dbReference type="PDBsum" id="4Y8L"/>
<dbReference type="PDBsum" id="4Y8M"/>
<dbReference type="PDBsum" id="4Y8N"/>
<dbReference type="PDBsum" id="4Y8O"/>
<dbReference type="PDBsum" id="4Y8P"/>
<dbReference type="PDBsum" id="4Y8Q"/>
<dbReference type="PDBsum" id="4Y8R"/>
<dbReference type="PDBsum" id="4Y8S"/>
<dbReference type="PDBsum" id="4Y8T"/>
<dbReference type="PDBsum" id="4Y8U"/>
<dbReference type="PDBsum" id="4Y9Y"/>
<dbReference type="PDBsum" id="4Y9Z"/>
<dbReference type="PDBsum" id="4YA0"/>
<dbReference type="PDBsum" id="4YA1"/>
<dbReference type="PDBsum" id="4YA2"/>
<dbReference type="PDBsum" id="4YA3"/>
<dbReference type="PDBsum" id="4YA4"/>
<dbReference type="PDBsum" id="4YA5"/>
<dbReference type="PDBsum" id="4YA7"/>
<dbReference type="PDBsum" id="4YA9"/>
<dbReference type="PDBsum" id="4Z1L"/>
<dbReference type="PDBsum" id="5A5B"/>
<dbReference type="PDBsum" id="5AHJ"/>
<dbReference type="PDBsum" id="5BOU"/>
<dbReference type="PDBsum" id="5BXL"/>
<dbReference type="PDBsum" id="5BXN"/>
<dbReference type="PDBsum" id="5CGF"/>
<dbReference type="PDBsum" id="5CGG"/>
<dbReference type="PDBsum" id="5CGH"/>
<dbReference type="PDBsum" id="5CGI"/>
<dbReference type="PDBsum" id="5CZ4"/>
<dbReference type="PDBsum" id="5CZ5"/>
<dbReference type="PDBsum" id="5CZ6"/>
<dbReference type="PDBsum" id="5CZ7"/>
<dbReference type="PDBsum" id="5CZ8"/>
<dbReference type="PDBsum" id="5CZ9"/>
<dbReference type="PDBsum" id="5CZA"/>
<dbReference type="PDBsum" id="5D0S"/>
<dbReference type="PDBsum" id="5D0T"/>
<dbReference type="PDBsum" id="5D0V"/>
<dbReference type="PDBsum" id="5D0W"/>
<dbReference type="PDBsum" id="5D0X"/>
<dbReference type="PDBsum" id="5D0Z"/>
<dbReference type="PDBsum" id="5DKI"/>
<dbReference type="PDBsum" id="5DKJ"/>
<dbReference type="PDBsum" id="5FG7"/>
<dbReference type="PDBsum" id="5FG9"/>
<dbReference type="PDBsum" id="5FGA"/>
<dbReference type="PDBsum" id="5FGD"/>
<dbReference type="PDBsum" id="5FGE"/>
<dbReference type="PDBsum" id="5FGF"/>
<dbReference type="PDBsum" id="5FGG"/>
<dbReference type="PDBsum" id="5FGH"/>
<dbReference type="PDBsum" id="5FGI"/>
<dbReference type="PDBsum" id="5FHS"/>
<dbReference type="PDBsum" id="5JHR"/>
<dbReference type="PDBsum" id="5JHS"/>
<dbReference type="PDBsum" id="5L52"/>
<dbReference type="PDBsum" id="5L54"/>
<dbReference type="PDBsum" id="5L55"/>
<dbReference type="PDBsum" id="5L5A"/>
<dbReference type="PDBsum" id="5L5B"/>
<dbReference type="PDBsum" id="5L5D"/>
<dbReference type="PDBsum" id="5L5E"/>
<dbReference type="PDBsum" id="5L5F"/>
<dbReference type="PDBsum" id="5L5H"/>
<dbReference type="PDBsum" id="5L5I"/>
<dbReference type="PDBsum" id="5L5J"/>
<dbReference type="PDBsum" id="5L5O"/>
<dbReference type="PDBsum" id="5L5P"/>
<dbReference type="PDBsum" id="5L5Q"/>
<dbReference type="PDBsum" id="5L5R"/>
<dbReference type="PDBsum" id="5L5S"/>
<dbReference type="PDBsum" id="5L5T"/>
<dbReference type="PDBsum" id="5L5U"/>
<dbReference type="PDBsum" id="5L5V"/>
<dbReference type="PDBsum" id="5L5W"/>
<dbReference type="PDBsum" id="5L5X"/>
<dbReference type="PDBsum" id="5L5Y"/>
<dbReference type="PDBsum" id="5L5Z"/>
<dbReference type="PDBsum" id="5L60"/>
<dbReference type="PDBsum" id="5L61"/>
<dbReference type="PDBsum" id="5L62"/>
<dbReference type="PDBsum" id="5L63"/>
<dbReference type="PDBsum" id="5L64"/>
<dbReference type="PDBsum" id="5L65"/>
<dbReference type="PDBsum" id="5L66"/>
<dbReference type="PDBsum" id="5L67"/>
<dbReference type="PDBsum" id="5L68"/>
<dbReference type="PDBsum" id="5L69"/>
<dbReference type="PDBsum" id="5L6A"/>
<dbReference type="PDBsum" id="5L6B"/>
<dbReference type="PDBsum" id="5L6C"/>
<dbReference type="PDBsum" id="5LAI"/>
<dbReference type="PDBsum" id="5LAJ"/>
<dbReference type="PDBsum" id="5LTT"/>
<dbReference type="PDBsum" id="5M2B"/>
<dbReference type="PDBsum" id="5MP9"/>
<dbReference type="PDBsum" id="5MPA"/>
<dbReference type="PDBsum" id="5MPB"/>
<dbReference type="PDBsum" id="5MPC"/>
<dbReference type="PDBsum" id="5NIF"/>
<dbReference type="PDBsum" id="5WVI"/>
<dbReference type="PDBsum" id="5WVK"/>
<dbReference type="PDBsum" id="6EF3"/>
<dbReference type="PDBsum" id="6FVT"/>
<dbReference type="PDBsum" id="6FVU"/>
<dbReference type="PDBsum" id="6FVV"/>
<dbReference type="PDBsum" id="6FVW"/>
<dbReference type="PDBsum" id="6FVX"/>
<dbReference type="PDBsum" id="6FVY"/>
<dbReference type="PDBsum" id="6G7F"/>
<dbReference type="PDBsum" id="6G8M"/>
<dbReference type="PDBsum" id="6G8N"/>
<dbReference type="PDBsum" id="6GOP"/>
<dbReference type="PDBsum" id="6H39"/>
<dbReference type="PDBsum" id="6HV3"/>
<dbReference type="PDBsum" id="6HV4"/>
<dbReference type="PDBsum" id="6HV5"/>
<dbReference type="PDBsum" id="6HV7"/>
<dbReference type="PDBsum" id="6HVA"/>
<dbReference type="PDBsum" id="6HVR"/>
<dbReference type="PDBsum" id="6HVS"/>
<dbReference type="PDBsum" id="6HVT"/>
<dbReference type="PDBsum" id="6HVU"/>
<dbReference type="PDBsum" id="6HVV"/>
<dbReference type="PDBsum" id="6HVW"/>
<dbReference type="PDBsum" id="6HVX"/>
<dbReference type="PDBsum" id="6HVY"/>
<dbReference type="PDBsum" id="6HW0"/>
<dbReference type="PDBsum" id="6HW3"/>
<dbReference type="PDBsum" id="6HW4"/>
<dbReference type="PDBsum" id="6HW5"/>
<dbReference type="PDBsum" id="6HW6"/>
<dbReference type="PDBsum" id="6HW7"/>
<dbReference type="PDBsum" id="6HW8"/>
<dbReference type="PDBsum" id="6HW9"/>
<dbReference type="PDBsum" id="6HWA"/>
<dbReference type="PDBsum" id="6HWB"/>
<dbReference type="PDBsum" id="6HWC"/>
<dbReference type="PDBsum" id="6HWD"/>
<dbReference type="PDBsum" id="6HWE"/>
<dbReference type="PDBsum" id="6HWF"/>
<dbReference type="PDBsum" id="6J2C"/>
<dbReference type="PDBsum" id="6J2N"/>
<dbReference type="PDBsum" id="6J2Q"/>
<dbReference type="PDBsum" id="6J2X"/>
<dbReference type="PDBsum" id="6J30"/>
<dbReference type="PDBsum" id="6ZOU"/>
<dbReference type="PDBsum" id="6ZP6"/>
<dbReference type="PDBsum" id="6ZP8"/>
<dbReference type="PDBsum" id="7LS5"/>
<dbReference type="PDBsum" id="7LS6"/>
<dbReference type="PDBsum" id="7LSX"/>
<dbReference type="PDBsum" id="7O2L"/>
<dbReference type="PDBsum" id="7QO3"/>
<dbReference type="PDBsum" id="7QO5"/>
<dbReference type="PDBsum" id="7TEJ"/>
<dbReference type="PDBsum" id="7TEO"/>
<dbReference type="PDBsum" id="8BW1"/>
<dbReference type="PDBsum" id="8OHZ"/>
<dbReference type="PDBsum" id="8OI1"/>
<dbReference type="PDBsum" id="8OLR"/>
<dbReference type="PDBsum" id="8RHJ"/>
<dbReference type="PDBsum" id="8RHK"/>
<dbReference type="PDBsum" id="8RHL"/>
<dbReference type="PDBsum" id="8RVL"/>
<dbReference type="PDBsum" id="8RVO"/>
<dbReference type="PDBsum" id="8RVP"/>
<dbReference type="PDBsum" id="8RVQ"/>
<dbReference type="PDBsum" id="8T08"/>
<dbReference type="PDBsum" id="8T0M"/>
<dbReference type="PDBsum" id="8U6Y"/>
<dbReference type="PDBsum" id="8U7U"/>
<dbReference type="PDBsum" id="9D0T"/>
<dbReference type="PDBsum" id="9FST"/>
<dbReference type="PDBsum" id="9FSV"/>
<dbReference type="PDBsum" id="9FT0"/>
<dbReference type="PDBsum" id="9FT1"/>
<dbReference type="PDBsum" id="9GBK"/>
<dbReference type="EMDB" id="EMD-14082"/>
<dbReference type="EMDB" id="EMD-14084"/>
<dbReference type="EMDB" id="EMD-19523"/>
<dbReference type="EMDB" id="EMD-19527"/>
<dbReference type="EMDB" id="EMD-19528"/>
<dbReference type="EMDB" id="EMD-19529"/>
<dbReference type="EMDB" id="EMD-23502"/>
<dbReference type="EMDB" id="EMD-23503"/>
<dbReference type="EMDB" id="EMD-23508"/>
<dbReference type="EMDB" id="EMD-25847"/>
<dbReference type="EMDB" id="EMD-25848"/>
<dbReference type="EMDB" id="EMD-3534"/>
<dbReference type="EMDB" id="EMD-3535"/>
<dbReference type="EMDB" id="EMD-3536"/>
<dbReference type="EMDB" id="EMD-3537"/>
<dbReference type="EMDB" id="EMD-40938"/>
<dbReference type="EMDB" id="EMD-40944"/>
<dbReference type="EMDB" id="EMD-41963"/>
<dbReference type="EMDB" id="EMD-41993"/>
<dbReference type="EMDB" id="EMD-4321"/>
<dbReference type="EMDB" id="EMD-4322"/>
<dbReference type="EMDB" id="EMD-4323"/>
<dbReference type="EMDB" id="EMD-4324"/>
<dbReference type="EMDB" id="EMD-46461"/>
<dbReference type="EMDB" id="EMD-51221"/>
<dbReference type="EMDB" id="EMD-6693"/>
<dbReference type="EMDB" id="EMD-6694"/>
<dbReference type="EMDB" id="EMD-9045"/>
<dbReference type="EMDB" id="EMD-9769"/>
<dbReference type="EMDB" id="EMD-9770"/>
<dbReference type="EMDB" id="EMD-9771"/>
<dbReference type="EMDB" id="EMD-9772"/>
<dbReference type="EMDB" id="EMD-9773"/>
<dbReference type="SMR" id="P25043"/>
<dbReference type="BioGRID" id="34553">
    <property type="interactions" value="303"/>
</dbReference>
<dbReference type="ComplexPortal" id="CPX-2262">
    <property type="entry name" value="26S proteasome complex"/>
</dbReference>
<dbReference type="DIP" id="DIP-2818N"/>
<dbReference type="FunCoup" id="P25043">
    <property type="interactions" value="1002"/>
</dbReference>
<dbReference type="IntAct" id="P25043">
    <property type="interactions" value="42"/>
</dbReference>
<dbReference type="MINT" id="P25043"/>
<dbReference type="STRING" id="4932.YOR157C"/>
<dbReference type="ChEMBL" id="CHEMBL4295577"/>
<dbReference type="MEROPS" id="T01.011"/>
<dbReference type="GlyGen" id="P25043">
    <property type="glycosylation" value="1 site"/>
</dbReference>
<dbReference type="iPTMnet" id="P25043"/>
<dbReference type="PaxDb" id="4932-YOR157C"/>
<dbReference type="PeptideAtlas" id="P25043"/>
<dbReference type="EnsemblFungi" id="YOR157C_mRNA">
    <property type="protein sequence ID" value="YOR157C"/>
    <property type="gene ID" value="YOR157C"/>
</dbReference>
<dbReference type="GeneID" id="854328"/>
<dbReference type="KEGG" id="sce:YOR157C"/>
<dbReference type="AGR" id="SGD:S000005683"/>
<dbReference type="SGD" id="S000005683">
    <property type="gene designation" value="PUP1"/>
</dbReference>
<dbReference type="VEuPathDB" id="FungiDB:YOR157C"/>
<dbReference type="eggNOG" id="KOG0173">
    <property type="taxonomic scope" value="Eukaryota"/>
</dbReference>
<dbReference type="GeneTree" id="ENSGT00940000168368"/>
<dbReference type="HOGENOM" id="CLU_035750_3_0_1"/>
<dbReference type="InParanoid" id="P25043"/>
<dbReference type="OMA" id="KQHLFRH"/>
<dbReference type="OrthoDB" id="429533at2759"/>
<dbReference type="BioCyc" id="YEAST:G3O-33674-MONOMER"/>
<dbReference type="Reactome" id="R-SCE-1236978">
    <property type="pathway name" value="Cross-presentation of soluble exogenous antigens (endosomes)"/>
</dbReference>
<dbReference type="Reactome" id="R-SCE-5668541">
    <property type="pathway name" value="TNFR2 non-canonical NF-kB pathway"/>
</dbReference>
<dbReference type="Reactome" id="R-SCE-5687128">
    <property type="pathway name" value="MAPK6/MAPK4 signaling"/>
</dbReference>
<dbReference type="Reactome" id="R-SCE-5689880">
    <property type="pathway name" value="Ub-specific processing proteases"/>
</dbReference>
<dbReference type="Reactome" id="R-SCE-6798695">
    <property type="pathway name" value="Neutrophil degranulation"/>
</dbReference>
<dbReference type="Reactome" id="R-SCE-68949">
    <property type="pathway name" value="Orc1 removal from chromatin"/>
</dbReference>
<dbReference type="Reactome" id="R-SCE-69017">
    <property type="pathway name" value="CDK-mediated phosphorylation and removal of Cdc6"/>
</dbReference>
<dbReference type="Reactome" id="R-SCE-69601">
    <property type="pathway name" value="Ubiquitin Mediated Degradation of Phosphorylated Cdc25A"/>
</dbReference>
<dbReference type="Reactome" id="R-SCE-8854050">
    <property type="pathway name" value="FBXL7 down-regulates AURKA during mitotic entry and in early mitosis"/>
</dbReference>
<dbReference type="Reactome" id="R-SCE-8948751">
    <property type="pathway name" value="Regulation of PTEN stability and activity"/>
</dbReference>
<dbReference type="Reactome" id="R-SCE-8951664">
    <property type="pathway name" value="Neddylation"/>
</dbReference>
<dbReference type="Reactome" id="R-SCE-9755511">
    <property type="pathway name" value="KEAP1-NFE2L2 pathway"/>
</dbReference>
<dbReference type="Reactome" id="R-SCE-983168">
    <property type="pathway name" value="Antigen processing: Ubiquitination &amp; Proteasome degradation"/>
</dbReference>
<dbReference type="Reactome" id="R-SCE-9907900">
    <property type="pathway name" value="Proteasome assembly"/>
</dbReference>
<dbReference type="BioGRID-ORCS" id="854328">
    <property type="hits" value="1 hit in 10 CRISPR screens"/>
</dbReference>
<dbReference type="EvolutionaryTrace" id="P25043"/>
<dbReference type="PRO" id="PR:P25043"/>
<dbReference type="Proteomes" id="UP000002311">
    <property type="component" value="Chromosome XV"/>
</dbReference>
<dbReference type="RNAct" id="P25043">
    <property type="molecule type" value="protein"/>
</dbReference>
<dbReference type="GO" id="GO:0005829">
    <property type="term" value="C:cytosol"/>
    <property type="evidence" value="ECO:0007005"/>
    <property type="project" value="SGD"/>
</dbReference>
<dbReference type="GO" id="GO:0005634">
    <property type="term" value="C:nucleus"/>
    <property type="evidence" value="ECO:0000314"/>
    <property type="project" value="SGD"/>
</dbReference>
<dbReference type="GO" id="GO:0000502">
    <property type="term" value="C:proteasome complex"/>
    <property type="evidence" value="ECO:0000353"/>
    <property type="project" value="ComplexPortal"/>
</dbReference>
<dbReference type="GO" id="GO:0019774">
    <property type="term" value="C:proteasome core complex, beta-subunit complex"/>
    <property type="evidence" value="ECO:0000314"/>
    <property type="project" value="SGD"/>
</dbReference>
<dbReference type="GO" id="GO:0034515">
    <property type="term" value="C:proteasome storage granule"/>
    <property type="evidence" value="ECO:0000314"/>
    <property type="project" value="SGD"/>
</dbReference>
<dbReference type="GO" id="GO:0004175">
    <property type="term" value="F:endopeptidase activity"/>
    <property type="evidence" value="ECO:0000315"/>
    <property type="project" value="SGD"/>
</dbReference>
<dbReference type="GO" id="GO:0004298">
    <property type="term" value="F:threonine-type endopeptidase activity"/>
    <property type="evidence" value="ECO:0007669"/>
    <property type="project" value="UniProtKB-KW"/>
</dbReference>
<dbReference type="GO" id="GO:0010499">
    <property type="term" value="P:proteasomal ubiquitin-independent protein catabolic process"/>
    <property type="evidence" value="ECO:0000314"/>
    <property type="project" value="SGD"/>
</dbReference>
<dbReference type="GO" id="GO:0043161">
    <property type="term" value="P:proteasome-mediated ubiquitin-dependent protein catabolic process"/>
    <property type="evidence" value="ECO:0000314"/>
    <property type="project" value="SGD"/>
</dbReference>
<dbReference type="CDD" id="cd03763">
    <property type="entry name" value="proteasome_beta_type_7"/>
    <property type="match status" value="1"/>
</dbReference>
<dbReference type="FunFam" id="3.60.20.10:FF:000005">
    <property type="entry name" value="Proteasome subunit beta type-2"/>
    <property type="match status" value="1"/>
</dbReference>
<dbReference type="Gene3D" id="3.60.20.10">
    <property type="entry name" value="Glutamine Phosphoribosylpyrophosphate, subunit 1, domain 1"/>
    <property type="match status" value="1"/>
</dbReference>
<dbReference type="InterPro" id="IPR029055">
    <property type="entry name" value="Ntn_hydrolases_N"/>
</dbReference>
<dbReference type="InterPro" id="IPR000243">
    <property type="entry name" value="Pept_T1A_subB"/>
</dbReference>
<dbReference type="InterPro" id="IPR024689">
    <property type="entry name" value="Proteasome_bsu_C"/>
</dbReference>
<dbReference type="InterPro" id="IPR016050">
    <property type="entry name" value="Proteasome_bsu_CS"/>
</dbReference>
<dbReference type="InterPro" id="IPR001353">
    <property type="entry name" value="Proteasome_sua/b"/>
</dbReference>
<dbReference type="InterPro" id="IPR023333">
    <property type="entry name" value="Proteasome_suB-type"/>
</dbReference>
<dbReference type="PANTHER" id="PTHR32194">
    <property type="entry name" value="METALLOPROTEASE TLDD"/>
    <property type="match status" value="1"/>
</dbReference>
<dbReference type="PANTHER" id="PTHR32194:SF4">
    <property type="entry name" value="PROTEASOME SUBUNIT BETA TYPE-7"/>
    <property type="match status" value="1"/>
</dbReference>
<dbReference type="Pfam" id="PF12465">
    <property type="entry name" value="Pr_beta_C"/>
    <property type="match status" value="1"/>
</dbReference>
<dbReference type="Pfam" id="PF00227">
    <property type="entry name" value="Proteasome"/>
    <property type="match status" value="1"/>
</dbReference>
<dbReference type="PRINTS" id="PR00141">
    <property type="entry name" value="PROTEASOME"/>
</dbReference>
<dbReference type="SUPFAM" id="SSF56235">
    <property type="entry name" value="N-terminal nucleophile aminohydrolases (Ntn hydrolases)"/>
    <property type="match status" value="1"/>
</dbReference>
<dbReference type="PROSITE" id="PS00854">
    <property type="entry name" value="PROTEASOME_BETA_1"/>
    <property type="match status" value="1"/>
</dbReference>
<dbReference type="PROSITE" id="PS51476">
    <property type="entry name" value="PROTEASOME_BETA_2"/>
    <property type="match status" value="1"/>
</dbReference>
<feature type="propeptide" id="PRO_0000026657" description="Removed in mature form">
    <location>
        <begin position="1"/>
        <end position="29"/>
    </location>
</feature>
<feature type="chain" id="PRO_0000026658" description="Proteasome subunit beta type-2">
    <location>
        <begin position="30"/>
        <end position="261"/>
    </location>
</feature>
<feature type="active site" description="Nucleophile" evidence="4">
    <location>
        <position position="30"/>
    </location>
</feature>
<feature type="helix" evidence="9">
    <location>
        <begin position="9"/>
        <end position="17"/>
    </location>
</feature>
<feature type="strand" evidence="7">
    <location>
        <begin position="23"/>
        <end position="25"/>
    </location>
</feature>
<feature type="strand" evidence="6">
    <location>
        <begin position="32"/>
        <end position="37"/>
    </location>
</feature>
<feature type="strand" evidence="6">
    <location>
        <begin position="40"/>
        <end position="45"/>
    </location>
</feature>
<feature type="strand" evidence="6">
    <location>
        <begin position="49"/>
        <end position="51"/>
    </location>
</feature>
<feature type="strand" evidence="6">
    <location>
        <begin position="54"/>
        <end position="59"/>
    </location>
</feature>
<feature type="strand" evidence="6">
    <location>
        <begin position="63"/>
        <end position="67"/>
    </location>
</feature>
<feature type="strand" evidence="6">
    <location>
        <begin position="70"/>
        <end position="76"/>
    </location>
</feature>
<feature type="helix" evidence="6">
    <location>
        <begin position="78"/>
        <end position="99"/>
    </location>
</feature>
<feature type="helix" evidence="6">
    <location>
        <begin position="105"/>
        <end position="118"/>
    </location>
</feature>
<feature type="turn" evidence="6">
    <location>
        <begin position="119"/>
        <end position="121"/>
    </location>
</feature>
<feature type="strand" evidence="6">
    <location>
        <begin position="125"/>
        <end position="133"/>
    </location>
</feature>
<feature type="strand" evidence="6">
    <location>
        <begin position="136"/>
        <end position="142"/>
    </location>
</feature>
<feature type="turn" evidence="5">
    <location>
        <begin position="144"/>
        <end position="146"/>
    </location>
</feature>
<feature type="strand" evidence="6">
    <location>
        <begin position="148"/>
        <end position="150"/>
    </location>
</feature>
<feature type="strand" evidence="6">
    <location>
        <begin position="152"/>
        <end position="157"/>
    </location>
</feature>
<feature type="helix" evidence="6">
    <location>
        <begin position="160"/>
        <end position="170"/>
    </location>
</feature>
<feature type="helix" evidence="6">
    <location>
        <begin position="177"/>
        <end position="194"/>
    </location>
</feature>
<feature type="strand" evidence="8">
    <location>
        <begin position="195"/>
        <end position="197"/>
    </location>
</feature>
<feature type="strand" evidence="6">
    <location>
        <begin position="202"/>
        <end position="208"/>
    </location>
</feature>
<feature type="strand" evidence="6">
    <location>
        <begin position="213"/>
        <end position="220"/>
    </location>
</feature>
<feature type="strand" evidence="6">
    <location>
        <begin position="241"/>
        <end position="246"/>
    </location>
</feature>
<sequence length="261" mass="28268">MAGLSFDNYQRNNFLAENSHTQPKATSTGTTIVGVKFNNGVVIAADTRSTQGPIVADKNCAKLHRISPKIWCAGAGTAADTEAVTQLIGSNIELHSLYTSREPRVVSALQMLKQHLFKYQGHIGAYLIVAGVDPTGSHLFSIHAHGSTDVGYYLSLGSGSLAAMAVLESHWKQDLTKEEAIKLASDAIQAGIWNDLGSGSNVDVCVMEIGKDAEYLRNYLTPNVREEKQKSYKFPRGTTAVLKESIVNICDIQEEQVDITA</sequence>
<comment type="function">
    <text>The proteasome degrades poly-ubiquitinated proteins in the cytoplasm and in the nucleus. It is essential for the regulated turnover of proteins and for the removal of misfolded proteins. The proteasome is a multicatalytic proteinase complex that is characterized by its ability to cleave peptides with Arg, Phe, Tyr, Leu, and Glu adjacent to the leaving group at neutral or slightly basic pH. It has an ATP-dependent proteolytic activity.</text>
</comment>
<comment type="catalytic activity">
    <reaction>
        <text>Cleavage of peptide bonds with very broad specificity.</text>
        <dbReference type="EC" id="3.4.25.1"/>
    </reaction>
</comment>
<comment type="subunit">
    <text evidence="3">The 26S proteasome consists of a 20S proteasome core and two 19S regulatory subunits. The 20S proteasome core is composed of 28 subunits that are arranged in four stacked rings, resulting in a barrel-shaped structure. The two end rings are each formed by seven alpha subunits, and the two central rings are each formed by seven beta subunits. The catalytic chamber with the active sites is on the inside of the barrel.</text>
</comment>
<comment type="interaction">
    <interactant intactId="EBI-14009">
        <id>P25043</id>
    </interactant>
    <interactant intactId="EBI-13993">
        <id>P25451</id>
        <label>PUP3</label>
    </interactant>
    <organismsDiffer>false</organismsDiffer>
    <experiments>3</experiments>
</comment>
<comment type="interaction">
    <interactant intactId="EBI-14009">
        <id>P25043</id>
    </interactant>
    <interactant intactId="EBI-14668">
        <id>P32628</id>
        <label>RAD23</label>
    </interactant>
    <organismsDiffer>false</organismsDiffer>
    <experiments>2</experiments>
</comment>
<comment type="subcellular location">
    <subcellularLocation>
        <location>Cytoplasm</location>
    </subcellularLocation>
    <subcellularLocation>
        <location>Nucleus</location>
    </subcellularLocation>
</comment>
<comment type="miscellaneous">
    <text>The side chain of Thr-30 acts as a nucleophile, and the N-terminal amino group acts as a proton acceptor.</text>
</comment>
<comment type="miscellaneous">
    <text evidence="2">Present with 11400 molecules/cell in log phase SD medium.</text>
</comment>
<comment type="similarity">
    <text evidence="1">Belongs to the peptidase T1B family.</text>
</comment>
<reference key="1">
    <citation type="journal article" date="1991" name="Nucleic Acids Res.">
        <title>Nucleotide sequence of PUP1 encoding a putative proteasome subunit in Saccharomyces cerevisiae.</title>
        <authorList>
            <person name="Haffter P."/>
            <person name="Fox T.D."/>
        </authorList>
    </citation>
    <scope>NUCLEOTIDE SEQUENCE [GENOMIC DNA]</scope>
</reference>
<reference key="2">
    <citation type="journal article" date="1997" name="Yeast">
        <title>Analysis of a 35.6 kb region on the right arm of Saccharomyces cerevisiae chromosome XV.</title>
        <authorList>
            <person name="Bordonne R."/>
            <person name="Camasses A."/>
            <person name="Madania A."/>
            <person name="Poch O."/>
            <person name="Tarassov I.A."/>
            <person name="Winsor B."/>
            <person name="Martin R.P."/>
        </authorList>
    </citation>
    <scope>NUCLEOTIDE SEQUENCE [GENOMIC DNA]</scope>
    <source>
        <strain>S288c / FY1678</strain>
    </source>
</reference>
<reference key="3">
    <citation type="journal article" date="1997" name="Nature">
        <title>The nucleotide sequence of Saccharomyces cerevisiae chromosome XV.</title>
        <authorList>
            <person name="Dujon B."/>
            <person name="Albermann K."/>
            <person name="Aldea M."/>
            <person name="Alexandraki D."/>
            <person name="Ansorge W."/>
            <person name="Arino J."/>
            <person name="Benes V."/>
            <person name="Bohn C."/>
            <person name="Bolotin-Fukuhara M."/>
            <person name="Bordonne R."/>
            <person name="Boyer J."/>
            <person name="Camasses A."/>
            <person name="Casamayor A."/>
            <person name="Casas C."/>
            <person name="Cheret G."/>
            <person name="Cziepluch C."/>
            <person name="Daignan-Fornier B."/>
            <person name="Dang V.-D."/>
            <person name="de Haan M."/>
            <person name="Delius H."/>
            <person name="Durand P."/>
            <person name="Fairhead C."/>
            <person name="Feldmann H."/>
            <person name="Gaillon L."/>
            <person name="Galisson F."/>
            <person name="Gamo F.-J."/>
            <person name="Gancedo C."/>
            <person name="Goffeau A."/>
            <person name="Goulding S.E."/>
            <person name="Grivell L.A."/>
            <person name="Habbig B."/>
            <person name="Hand N.J."/>
            <person name="Hani J."/>
            <person name="Hattenhorst U."/>
            <person name="Hebling U."/>
            <person name="Hernando Y."/>
            <person name="Herrero E."/>
            <person name="Heumann K."/>
            <person name="Hiesel R."/>
            <person name="Hilger F."/>
            <person name="Hofmann B."/>
            <person name="Hollenberg C.P."/>
            <person name="Hughes B."/>
            <person name="Jauniaux J.-C."/>
            <person name="Kalogeropoulos A."/>
            <person name="Katsoulou C."/>
            <person name="Kordes E."/>
            <person name="Lafuente M.J."/>
            <person name="Landt O."/>
            <person name="Louis E.J."/>
            <person name="Maarse A.C."/>
            <person name="Madania A."/>
            <person name="Mannhaupt G."/>
            <person name="Marck C."/>
            <person name="Martin R.P."/>
            <person name="Mewes H.-W."/>
            <person name="Michaux G."/>
            <person name="Paces V."/>
            <person name="Parle-McDermott A.G."/>
            <person name="Pearson B.M."/>
            <person name="Perrin A."/>
            <person name="Pettersson B."/>
            <person name="Poch O."/>
            <person name="Pohl T.M."/>
            <person name="Poirey R."/>
            <person name="Portetelle D."/>
            <person name="Pujol A."/>
            <person name="Purnelle B."/>
            <person name="Ramezani Rad M."/>
            <person name="Rechmann S."/>
            <person name="Schwager C."/>
            <person name="Schweizer M."/>
            <person name="Sor F."/>
            <person name="Sterky F."/>
            <person name="Tarassov I.A."/>
            <person name="Teodoru C."/>
            <person name="Tettelin H."/>
            <person name="Thierry A."/>
            <person name="Tobiasch E."/>
            <person name="Tzermia M."/>
            <person name="Uhlen M."/>
            <person name="Unseld M."/>
            <person name="Valens M."/>
            <person name="Vandenbol M."/>
            <person name="Vetter I."/>
            <person name="Vlcek C."/>
            <person name="Voet M."/>
            <person name="Volckaert G."/>
            <person name="Voss H."/>
            <person name="Wambutt R."/>
            <person name="Wedler H."/>
            <person name="Wiemann S."/>
            <person name="Winsor B."/>
            <person name="Wolfe K.H."/>
            <person name="Zollner A."/>
            <person name="Zumstein E."/>
            <person name="Kleine K."/>
        </authorList>
    </citation>
    <scope>NUCLEOTIDE SEQUENCE [LARGE SCALE GENOMIC DNA]</scope>
    <source>
        <strain>ATCC 204508 / S288c</strain>
    </source>
</reference>
<reference key="4">
    <citation type="journal article" date="2014" name="G3 (Bethesda)">
        <title>The reference genome sequence of Saccharomyces cerevisiae: Then and now.</title>
        <authorList>
            <person name="Engel S.R."/>
            <person name="Dietrich F.S."/>
            <person name="Fisk D.G."/>
            <person name="Binkley G."/>
            <person name="Balakrishnan R."/>
            <person name="Costanzo M.C."/>
            <person name="Dwight S.S."/>
            <person name="Hitz B.C."/>
            <person name="Karra K."/>
            <person name="Nash R.S."/>
            <person name="Weng S."/>
            <person name="Wong E.D."/>
            <person name="Lloyd P."/>
            <person name="Skrzypek M.S."/>
            <person name="Miyasato S.R."/>
            <person name="Simison M."/>
            <person name="Cherry J.M."/>
        </authorList>
    </citation>
    <scope>GENOME REANNOTATION</scope>
    <source>
        <strain>ATCC 204508 / S288c</strain>
    </source>
</reference>
<reference key="5">
    <citation type="journal article" date="2003" name="Nature">
        <title>Global analysis of protein expression in yeast.</title>
        <authorList>
            <person name="Ghaemmaghami S."/>
            <person name="Huh W.-K."/>
            <person name="Bower K."/>
            <person name="Howson R.W."/>
            <person name="Belle A."/>
            <person name="Dephoure N."/>
            <person name="O'Shea E.K."/>
            <person name="Weissman J.S."/>
        </authorList>
    </citation>
    <scope>LEVEL OF PROTEIN EXPRESSION [LARGE SCALE ANALYSIS]</scope>
</reference>
<reference key="6">
    <citation type="journal article" date="2012" name="Proc. Natl. Acad. Sci. U.S.A.">
        <title>N-terminal acetylome analyses and functional insights of the N-terminal acetyltransferase NatB.</title>
        <authorList>
            <person name="Van Damme P."/>
            <person name="Lasa M."/>
            <person name="Polevoda B."/>
            <person name="Gazquez C."/>
            <person name="Elosegui-Artola A."/>
            <person name="Kim D.S."/>
            <person name="De Juan-Pardo E."/>
            <person name="Demeyer K."/>
            <person name="Hole K."/>
            <person name="Larrea E."/>
            <person name="Timmerman E."/>
            <person name="Prieto J."/>
            <person name="Arnesen T."/>
            <person name="Sherman F."/>
            <person name="Gevaert K."/>
            <person name="Aldabe R."/>
        </authorList>
    </citation>
    <scope>IDENTIFICATION BY MASS SPECTROMETRY [LARGE SCALE ANALYSIS]</scope>
</reference>
<reference key="7">
    <citation type="journal article" date="1997" name="Nature">
        <title>Structure of 20S proteasome from yeast at 2.4-A resolution.</title>
        <authorList>
            <person name="Groll M."/>
            <person name="Ditzel L."/>
            <person name="Loewe J."/>
            <person name="Stock D."/>
            <person name="Bochtler M."/>
            <person name="Bartunik H.D."/>
            <person name="Huber R."/>
        </authorList>
    </citation>
    <scope>X-RAY CRYSTALLOGRAPHY (1.9 ANGSTROMS) OF 30-251 OF COMPLEX WITH THE 20S PROTEASOME</scope>
    <scope>PROTEOLYTIC PROCESSING</scope>
    <scope>ACTIVE SITE</scope>
</reference>
<reference key="8">
    <citation type="journal article" date="2000" name="Nature">
        <title>Structural basis for the activation of 20S proteasomes by 11S regulators.</title>
        <authorList>
            <person name="Whitby F.G."/>
            <person name="Masters E.I."/>
            <person name="Kramer L."/>
            <person name="Knowlton J.R."/>
            <person name="Yao Y."/>
            <person name="Wang C.C."/>
            <person name="Hill C.P."/>
        </authorList>
    </citation>
    <scope>X-RAY CRYSTALLOGRAPHY (3.2 ANGSTROMS) OF 30-261 OF COMPLEX WITH THE 20S PROTEASOME AND A 11S REGULATORY COMPLEX</scope>
</reference>
<reference key="9">
    <citation type="journal article" date="2000" name="Nat. Struct. Biol.">
        <title>A gated channel into the proteasome core particle.</title>
        <authorList>
            <person name="Groll M."/>
            <person name="Bajorek M."/>
            <person name="Koehler A."/>
            <person name="Moroder L."/>
            <person name="Rubin D.M."/>
            <person name="Huber R."/>
            <person name="Glickman M.H."/>
            <person name="Finley D."/>
        </authorList>
    </citation>
    <scope>X-RAY CRYSTALLOGRAPHY (2.4 ANGSTROMS) OF COMPLEX WITH THE 20S PROTEASOME</scope>
</reference>
<reference key="10">
    <citation type="journal article" date="2006" name="Chem. Biol.">
        <title>TMC-95-based inhibitor design provides evidence for the catalytic versatility of the proteasome.</title>
        <authorList>
            <person name="Groll M."/>
            <person name="Goetz M."/>
            <person name="Kaiser M."/>
            <person name="Weyher E."/>
            <person name="Moroder L."/>
        </authorList>
    </citation>
    <scope>X-RAY CRYSTALLOGRAPHY (2.81 ANGSTROMS) OF 30-251 OF COMPLEX WITH THE 20S PROTEASOME AND A TMC-95-BASED INHIBITOR</scope>
</reference>
<reference key="11">
    <citation type="journal article" date="2006" name="J. Am. Chem. Soc.">
        <title>Crystal structures of salinosporamide A (NPI-0052) and B (NPI-0047) in complex with the 20S proteasome reveal important consequences of beta-lactone ring opening and a mechanism for irreversible binding.</title>
        <authorList>
            <person name="Groll M."/>
            <person name="Huber R."/>
            <person name="Potts B.C.M."/>
        </authorList>
    </citation>
    <scope>X-RAY CRYSTALLOGRAPHY (2.8 ANGSTROMS) OF 30-251 OF COMPLEX WITH THE 20S PROTEASOME AND SALINOSPORAMIDE</scope>
</reference>
<reference key="12">
    <citation type="journal article" date="2006" name="Structure">
        <title>Crystal structure of the boronic acid-based proteasome inhibitor bortezomib in complex with the yeast 20S proteasome.</title>
        <authorList>
            <person name="Groll M."/>
            <person name="Berkers C.R."/>
            <person name="Ploegh H.L."/>
            <person name="Ovaa H."/>
        </authorList>
    </citation>
    <scope>X-RAY CRYSTALLOGRAPHY (2.8 ANGSTROMS) OF 30-251 OF COMPLEX WITH THE 20S PROTEASOME AND BORTEZOMIB</scope>
</reference>
<reference key="13">
    <citation type="journal article" date="2010" name="Mol. Cell">
        <title>Structure of a Blm10 complex reveals common mechanisms for proteasome binding and gate opening.</title>
        <authorList>
            <person name="Sadre-Bazzaz K."/>
            <person name="Whitby F.G."/>
            <person name="Robinson H."/>
            <person name="Formosa T."/>
            <person name="Hill C.P."/>
        </authorList>
    </citation>
    <scope>X-RAY CRYSTALLOGRAPHY (3.0 ANGSTROMS) OF 30-251 IN COMPLEX WITH THE PROTEASOME</scope>
</reference>
<reference key="14">
    <citation type="journal article" date="2012" name="Proc. Natl. Acad. Sci. U.S.A.">
        <title>Near-atomic resolution structural model of the yeast 26S proteasome.</title>
        <authorList>
            <person name="Beck F."/>
            <person name="Unverdorben P."/>
            <person name="Bohn S."/>
            <person name="Schweitzer A."/>
            <person name="Pfeifer G."/>
            <person name="Sakata E."/>
            <person name="Nickell S."/>
            <person name="Plitzko J.M."/>
            <person name="Villa E."/>
            <person name="Baumeister W."/>
            <person name="Forster F."/>
        </authorList>
    </citation>
    <scope>STRUCTURE BY ELECTRON MICROSCOPY (7.4 ANGSTROMS) OF THE 26S PROTEASOME</scope>
</reference>
<evidence type="ECO:0000255" key="1">
    <source>
        <dbReference type="PROSITE-ProRule" id="PRU00809"/>
    </source>
</evidence>
<evidence type="ECO:0000269" key="2">
    <source>
    </source>
</evidence>
<evidence type="ECO:0000269" key="3">
    <source>
    </source>
</evidence>
<evidence type="ECO:0000269" key="4">
    <source>
    </source>
</evidence>
<evidence type="ECO:0007829" key="5">
    <source>
        <dbReference type="PDB" id="1G0U"/>
    </source>
</evidence>
<evidence type="ECO:0007829" key="6">
    <source>
        <dbReference type="PDB" id="1RYP"/>
    </source>
</evidence>
<evidence type="ECO:0007829" key="7">
    <source>
        <dbReference type="PDB" id="5FGI"/>
    </source>
</evidence>
<evidence type="ECO:0007829" key="8">
    <source>
        <dbReference type="PDB" id="6HVV"/>
    </source>
</evidence>
<evidence type="ECO:0007829" key="9">
    <source>
        <dbReference type="PDB" id="8T08"/>
    </source>
</evidence>
<protein>
    <recommendedName>
        <fullName>Proteasome subunit beta type-2</fullName>
        <ecNumber>3.4.25.1</ecNumber>
    </recommendedName>
    <alternativeName>
        <fullName>Macropain subunit PUP1</fullName>
    </alternativeName>
    <alternativeName>
        <fullName>Multicatalytic endopeptidase complex subunit PUP1</fullName>
    </alternativeName>
    <alternativeName>
        <fullName>Proteasome component PUP1</fullName>
    </alternativeName>
    <alternativeName>
        <fullName>Proteinase YSCE subunit PUP1</fullName>
    </alternativeName>
</protein>
<name>PSB2_YEAST</name>